<gene>
    <name type="primary">ROCK1</name>
</gene>
<sequence length="1354" mass="158175">MSTGDSFETRFEKMDNLLRDPKSEVNSDCLLDGLDALVYDLDFPALRKNKNIDNFLSRYKDTINKIRDLRMKAEDYEVVKVIGRGAFGEVQLVRHKSTRKVYAMKLLSKFEMIKRSDSAFFWEERDIMAFANSPWVVQLFYAFQDDRYLYMVMEYMPGGDLVNLMSNYDVPEKWARFYTAEVVLALDAIHSMGFIHRDVKPDNMLLDKSGHLKLADFGTCMKMNKEGMVRCDTAVGTPDYISPEVLKSQGGDGYYGRECDWWSVGVFLYEMLVGDTPFYADSLVGTYSKIMNHKNSLTFPDDNDISKEAKNLICAFLTDREVRLGRNGVEEIKRHLFFKNDQWAWETLRDTVAPVVPDLSSDIDTSNFDDLEEDKGEEETFPIPKAFVGNQLPFVGFTYYSNRRYLSSANPNDNRTSSNADKSLQESLQKTIYKLEEQLHNEMQLKDEMEQKCRTSNIKLDKIMKELDEEGNQRRNLESTVSQIEKEKMLLQHRINEYQRKAEQENEKRRNVENEVSTLKDQLEDLKKVSQNSQLANEKLSQLQKQLEEANDLLRTESDTAVRLRKSHTEMSKSISQLESLNRELQERNRILENSKSQTDKDYYQLQAILEAERRDRGHDSEMIGDLQARITSLQEEVKHLKHNLEKVEGERKEAQDMLNHSEKEKNNLEIDLNYKLKSLQQRLEQEVNEHKVTKARLTDKHQSIEEAKSVAMCEMEKKLKEEREAREKAENRVVQIEKQCSMLDVDLKQSQQKLEHLTGNKERMEDEVKNLTLQLEQESNKRLLLQNELKTQAFEADNLKGLEKQMKQEINTLLEAKRLLEFELAQLTKQYRGNEGQMRELQDQLEAEQYFSTLYKTQVKELKEEIEEKNRENLKKIQELQNEKETLATQLDLAETKAESEQLARGLLEEQYFELTQESKKAASRNRQEITDKDHTVSRLEEANSMLTKDIEILRRENEELTEKMKKAEEEYKLEKEEEISNLKAAFEKNINTERTLKTQAVNKLAEIMNRKDFKIDRKKANTQDLRKKEKENRKLQLELNQEREKFNQMVVKHQKELNDMQAQLVEECAHRNELQMQLASKESDIEQLRAKLLDLSDSTSVASFPSADETDGNLPESRIEGWLSVPNRGNIKRYGWKKQYVVVSSKKILFYNDEQDKEQSNPSMVLDIDKLFHVRPVTQGDVYRAETEEIPKIFQILYANEGECRKDVEMEPVQQAEKTNFQNHKGHEFIPTLYHFPANCDACAKPLWHVFKPPPALECRRCHVKCHRDHLDKKEDLICPCKVSYDVTSARDMLLLACSQDEQKKWVTHLVKKIPKNPPSGFVRASPRTLSTRSTANQSFRKVVKNTSGKTS</sequence>
<comment type="function">
    <text evidence="1 2 12 13 14 15 20 23 24 25 26 27 28 30 32 33 34 35">Protein kinase which is a key regulator of the actin cytoskeleton and cell polarity (PubMed:10436159, PubMed:10652353, PubMed:11018042, PubMed:11283607, PubMed:17158456, PubMed:18573880, PubMed:19131646, PubMed:8617235, PubMed:9722579). Involved in regulation of smooth muscle contraction, actin cytoskeleton organization, stress fiber and focal adhesion formation, neurite retraction, cell adhesion and motility via phosphorylation of DAPK3, GFAP, LIMK1, LIMK2, MYL9/MLC2, TPPP, PFN1 and PPP1R12A (PubMed:10436159, PubMed:10652353, PubMed:11018042, PubMed:11283607, PubMed:17158456, PubMed:18573880, PubMed:19131646, PubMed:23093407, PubMed:23355470, PubMed:8617235, PubMed:9722579). Phosphorylates FHOD1 and acts synergistically with it to promote SRC-dependent non-apoptotic plasma membrane blebbing (PubMed:18694941). Phosphorylates JIP3 and regulates the recruitment of JNK to JIP3 upon UVB-induced stress (PubMed:19036714). Acts as a suppressor of inflammatory cell migration by regulating PTEN phosphorylation and stability (By similarity). Acts as a negative regulator of VEGF-induced angiogenic endothelial cell activation (PubMed:19181962). Required for centrosome positioning and centrosome-dependent exit from mitosis (By similarity). Plays a role in terminal erythroid differentiation (PubMed:21072057). Inhibits podocyte motility via regulation of actin cytoskeletal dynamics and phosphorylation of CFL1 (By similarity). Promotes keratinocyte terminal differentiation (PubMed:19997641). Involved in osteoblast compaction through the fibronectin fibrillogenesis cell-mediated matrix assembly process, essential for osteoblast mineralization (By similarity). May regulate closure of the eyelids and ventral body wall by inducing the assembly of actomyosin bundles (By similarity).</text>
</comment>
<comment type="catalytic activity">
    <reaction evidence="12 13 14 32 33">
        <text>L-seryl-[protein] + ATP = O-phospho-L-seryl-[protein] + ADP + H(+)</text>
        <dbReference type="Rhea" id="RHEA:17989"/>
        <dbReference type="Rhea" id="RHEA-COMP:9863"/>
        <dbReference type="Rhea" id="RHEA-COMP:11604"/>
        <dbReference type="ChEBI" id="CHEBI:15378"/>
        <dbReference type="ChEBI" id="CHEBI:29999"/>
        <dbReference type="ChEBI" id="CHEBI:30616"/>
        <dbReference type="ChEBI" id="CHEBI:83421"/>
        <dbReference type="ChEBI" id="CHEBI:456216"/>
        <dbReference type="EC" id="2.7.11.1"/>
    </reaction>
    <physiologicalReaction direction="left-to-right" evidence="12 13 14 32 33">
        <dbReference type="Rhea" id="RHEA:17990"/>
    </physiologicalReaction>
</comment>
<comment type="catalytic activity">
    <reaction evidence="12 13 14 32 33">
        <text>L-threonyl-[protein] + ATP = O-phospho-L-threonyl-[protein] + ADP + H(+)</text>
        <dbReference type="Rhea" id="RHEA:46608"/>
        <dbReference type="Rhea" id="RHEA-COMP:11060"/>
        <dbReference type="Rhea" id="RHEA-COMP:11605"/>
        <dbReference type="ChEBI" id="CHEBI:15378"/>
        <dbReference type="ChEBI" id="CHEBI:30013"/>
        <dbReference type="ChEBI" id="CHEBI:30616"/>
        <dbReference type="ChEBI" id="CHEBI:61977"/>
        <dbReference type="ChEBI" id="CHEBI:456216"/>
        <dbReference type="EC" id="2.7.11.1"/>
    </reaction>
    <physiologicalReaction direction="left-to-right" evidence="12 13 14 32 33">
        <dbReference type="Rhea" id="RHEA:46609"/>
    </physiologicalReaction>
</comment>
<comment type="cofactor">
    <cofactor>
        <name>Mg(2+)</name>
        <dbReference type="ChEBI" id="CHEBI:18420"/>
    </cofactor>
</comment>
<comment type="activity regulation">
    <text>Activated by RHOA binding. Inhibited by Y-27632.</text>
</comment>
<comment type="subunit">
    <text evidence="1 12 13 14 15 16 17 18 19 20 22 23 24 25 26 29 31 34">Homodimer. Interacts with RHOB, RHOC, MYLC2B and PTEN. Interacts with ITGB1BP1 (via N-terminus and PTB domain) (By similarity). Interacts with RHOA (activated by GTP), CHORDC1, DAPK3, GEM, JIP3, RHOE, PPP1R12A, PFN1, LIMK1, LIMK2 and TSG101. Interacts with FHOD1 in a Src-dependent manner. Interacts with SHROOM3 (PubMed:22493320).</text>
</comment>
<comment type="interaction">
    <interactant intactId="EBI-876651">
        <id>Q13464</id>
    </interactant>
    <interactant intactId="EBI-749051">
        <id>Q8IYR0</id>
        <label>CFAP206</label>
    </interactant>
    <organismsDiffer>false</organismsDiffer>
    <experiments>3</experiments>
</comment>
<comment type="interaction">
    <interactant intactId="EBI-876651">
        <id>Q13464</id>
    </interactant>
    <interactant intactId="EBI-744506">
        <id>Q86V42</id>
        <label>FAM124A</label>
    </interactant>
    <organismsDiffer>false</organismsDiffer>
    <experiments>3</experiments>
</comment>
<comment type="interaction">
    <interactant intactId="EBI-876651">
        <id>Q13464</id>
    </interactant>
    <interactant intactId="EBI-727282">
        <id>Q7Z6J6</id>
        <label>FRMD5</label>
    </interactant>
    <organismsDiffer>false</organismsDiffer>
    <experiments>4</experiments>
</comment>
<comment type="interaction">
    <interactant intactId="EBI-876651">
        <id>Q13464</id>
    </interactant>
    <interactant intactId="EBI-739696">
        <id>P25791</id>
        <label>LMO2</label>
    </interactant>
    <organismsDiffer>false</organismsDiffer>
    <experiments>3</experiments>
</comment>
<comment type="interaction">
    <interactant intactId="EBI-876651">
        <id>Q13464</id>
    </interactant>
    <interactant intactId="EBI-751857">
        <id>O15481</id>
        <label>MAGEB4</label>
    </interactant>
    <organismsDiffer>false</organismsDiffer>
    <experiments>6</experiments>
</comment>
<comment type="interaction">
    <interactant intactId="EBI-876651">
        <id>Q13464</id>
    </interactant>
    <interactant intactId="EBI-5655165">
        <id>Q13203</id>
        <label>MYBPH</label>
    </interactant>
    <organismsDiffer>false</organismsDiffer>
    <experiments>2</experiments>
</comment>
<comment type="interaction">
    <interactant intactId="EBI-876651">
        <id>Q13464</id>
    </interactant>
    <interactant intactId="EBI-5452779">
        <id>Q9BUI4</id>
        <label>POLR3C</label>
    </interactant>
    <organismsDiffer>false</organismsDiffer>
    <experiments>3</experiments>
</comment>
<comment type="interaction">
    <interactant intactId="EBI-876651">
        <id>Q13464</id>
    </interactant>
    <interactant intactId="EBI-446668">
        <id>P61586</id>
        <label>RHOA</label>
    </interactant>
    <organismsDiffer>false</organismsDiffer>
    <experiments>4</experiments>
</comment>
<comment type="interaction">
    <interactant intactId="EBI-876651">
        <id>Q13464</id>
    </interactant>
    <interactant intactId="EBI-346882">
        <id>Q99816</id>
        <label>TSG101</label>
    </interactant>
    <organismsDiffer>false</organismsDiffer>
    <experiments>4</experiments>
</comment>
<comment type="subcellular location">
    <subcellularLocation>
        <location evidence="34">Cytoplasm</location>
    </subcellularLocation>
    <subcellularLocation>
        <location evidence="1">Cytoplasm</location>
        <location evidence="1">Cytoskeleton</location>
        <location evidence="1">Microtubule organizing center</location>
        <location evidence="1">Centrosome</location>
        <location evidence="1">Centriole</location>
    </subcellularLocation>
    <subcellularLocation>
        <location evidence="17">Golgi apparatus membrane</location>
        <topology evidence="17">Peripheral membrane protein</topology>
    </subcellularLocation>
    <subcellularLocation>
        <location evidence="24">Cell projection</location>
        <location evidence="24">Bleb</location>
    </subcellularLocation>
    <subcellularLocation>
        <location evidence="1">Cytoplasm</location>
        <location evidence="1">Cytoskeleton</location>
    </subcellularLocation>
    <subcellularLocation>
        <location evidence="1">Cell membrane</location>
    </subcellularLocation>
    <subcellularLocation>
        <location evidence="1">Cell projection</location>
        <location evidence="1">Lamellipodium</location>
    </subcellularLocation>
    <subcellularLocation>
        <location evidence="1">Cell projection</location>
        <location evidence="1">Ruffle</location>
    </subcellularLocation>
    <text evidence="1 17">A small proportion is associated with Golgi membranes (PubMed:12773565). Associated with the mother centriole and an intercentriolar linker (By similarity). Colocalizes with ITGB1BP1 and ITGB1 at the cell membrane predominantly in lamellipodia and membrane ruffles, but also in retraction fibers (By similarity). Localizes at the cell membrane in an ITGB1BP1-dependent manner (By similarity).</text>
</comment>
<comment type="tissue specificity">
    <text evidence="34">Detected in blood platelets.</text>
</comment>
<comment type="domain">
    <text>The C-terminal auto-inhibitory domain interferes with kinase activity. RHOA binding leads to a conformation change and activation of the kinase. Truncated ROCK1 is constitutively activated.</text>
</comment>
<comment type="PTM">
    <text evidence="34">Autophosphorylated on serine and threonine residues.</text>
</comment>
<comment type="PTM">
    <text>Cleaved by caspase-3 during apoptosis. This leads to constitutive activation of the kinase and membrane blebbing.</text>
</comment>
<comment type="similarity">
    <text evidence="37">Belongs to the protein kinase superfamily. AGC Ser/Thr protein kinase family.</text>
</comment>
<dbReference type="EC" id="2.7.11.1" evidence="12 13 14 32 33"/>
<dbReference type="EMBL" id="U43195">
    <property type="protein sequence ID" value="AAB02814.1"/>
    <property type="molecule type" value="mRNA"/>
</dbReference>
<dbReference type="EMBL" id="EF445027">
    <property type="protein sequence ID" value="ACA06069.1"/>
    <property type="molecule type" value="Genomic_DNA"/>
</dbReference>
<dbReference type="EMBL" id="BC113114">
    <property type="protein sequence ID" value="AAI13115.1"/>
    <property type="molecule type" value="mRNA"/>
</dbReference>
<dbReference type="EMBL" id="AB208965">
    <property type="protein sequence ID" value="BAD92202.1"/>
    <property type="molecule type" value="mRNA"/>
</dbReference>
<dbReference type="CCDS" id="CCDS11870.2"/>
<dbReference type="PIR" id="S69211">
    <property type="entry name" value="S69211"/>
</dbReference>
<dbReference type="RefSeq" id="NP_005397.1">
    <property type="nucleotide sequence ID" value="NM_005406.3"/>
</dbReference>
<dbReference type="PDB" id="1S1C">
    <property type="method" value="X-ray"/>
    <property type="resolution" value="2.60 A"/>
    <property type="chains" value="X/Y=947-1015"/>
</dbReference>
<dbReference type="PDB" id="2ESM">
    <property type="method" value="X-ray"/>
    <property type="resolution" value="3.20 A"/>
    <property type="chains" value="A/B=6-415"/>
</dbReference>
<dbReference type="PDB" id="2ETK">
    <property type="method" value="X-ray"/>
    <property type="resolution" value="2.96 A"/>
    <property type="chains" value="A/B=6-415"/>
</dbReference>
<dbReference type="PDB" id="2ETR">
    <property type="method" value="X-ray"/>
    <property type="resolution" value="2.60 A"/>
    <property type="chains" value="A/B=6-415"/>
</dbReference>
<dbReference type="PDB" id="2V55">
    <property type="method" value="X-ray"/>
    <property type="resolution" value="3.70 A"/>
    <property type="chains" value="A/C=1-406"/>
</dbReference>
<dbReference type="PDB" id="3D9V">
    <property type="method" value="X-ray"/>
    <property type="resolution" value="3.30 A"/>
    <property type="chains" value="A/B=6-415"/>
</dbReference>
<dbReference type="PDB" id="3NCZ">
    <property type="method" value="X-ray"/>
    <property type="resolution" value="3.00 A"/>
    <property type="chains" value="A/B/C/D=6-415"/>
</dbReference>
<dbReference type="PDB" id="3NDM">
    <property type="method" value="X-ray"/>
    <property type="resolution" value="3.30 A"/>
    <property type="chains" value="A/B/C/D=6-415"/>
</dbReference>
<dbReference type="PDB" id="3O0Z">
    <property type="method" value="X-ray"/>
    <property type="resolution" value="2.33 A"/>
    <property type="chains" value="A/B/C/D=535-700"/>
</dbReference>
<dbReference type="PDB" id="3TV7">
    <property type="method" value="X-ray"/>
    <property type="resolution" value="2.75 A"/>
    <property type="chains" value="A/B/C/D=6-415"/>
</dbReference>
<dbReference type="PDB" id="3TWJ">
    <property type="method" value="X-ray"/>
    <property type="resolution" value="2.90 A"/>
    <property type="chains" value="A/B/C/D=6-415"/>
</dbReference>
<dbReference type="PDB" id="3V8S">
    <property type="method" value="X-ray"/>
    <property type="resolution" value="2.29 A"/>
    <property type="chains" value="A/B/C/D=6-415"/>
</dbReference>
<dbReference type="PDB" id="4L2W">
    <property type="method" value="X-ray"/>
    <property type="resolution" value="2.49 A"/>
    <property type="chains" value="A/B/C/D=834-914"/>
</dbReference>
<dbReference type="PDB" id="4W7P">
    <property type="method" value="X-ray"/>
    <property type="resolution" value="2.80 A"/>
    <property type="chains" value="A/B/C/D=2-410"/>
</dbReference>
<dbReference type="PDB" id="4YVC">
    <property type="method" value="X-ray"/>
    <property type="resolution" value="3.20 A"/>
    <property type="chains" value="A/B=6-415"/>
</dbReference>
<dbReference type="PDB" id="4YVE">
    <property type="method" value="X-ray"/>
    <property type="resolution" value="3.40 A"/>
    <property type="chains" value="A/B=6-415"/>
</dbReference>
<dbReference type="PDB" id="5BML">
    <property type="method" value="X-ray"/>
    <property type="resolution" value="2.95 A"/>
    <property type="chains" value="A/B=6-415"/>
</dbReference>
<dbReference type="PDB" id="5F5P">
    <property type="method" value="X-ray"/>
    <property type="resolution" value="3.57 A"/>
    <property type="chains" value="C/D/E/F=834-913"/>
</dbReference>
<dbReference type="PDB" id="5HVU">
    <property type="method" value="X-ray"/>
    <property type="resolution" value="2.80 A"/>
    <property type="chains" value="A/B=6-415"/>
</dbReference>
<dbReference type="PDB" id="5KKS">
    <property type="method" value="X-ray"/>
    <property type="resolution" value="3.30 A"/>
    <property type="chains" value="A/B=6-415"/>
</dbReference>
<dbReference type="PDB" id="5KKT">
    <property type="method" value="X-ray"/>
    <property type="resolution" value="2.80 A"/>
    <property type="chains" value="A/B=6-415"/>
</dbReference>
<dbReference type="PDB" id="5UZJ">
    <property type="method" value="X-ray"/>
    <property type="resolution" value="3.30 A"/>
    <property type="chains" value="A/B=6-415"/>
</dbReference>
<dbReference type="PDB" id="5WNE">
    <property type="method" value="X-ray"/>
    <property type="resolution" value="2.60 A"/>
    <property type="chains" value="A/B/C/D=6-415"/>
</dbReference>
<dbReference type="PDB" id="5WNF">
    <property type="method" value="X-ray"/>
    <property type="resolution" value="2.45 A"/>
    <property type="chains" value="A/B/C/D=6-415"/>
</dbReference>
<dbReference type="PDB" id="5WNG">
    <property type="method" value="X-ray"/>
    <property type="resolution" value="2.90 A"/>
    <property type="chains" value="A/B/C/D=6-415"/>
</dbReference>
<dbReference type="PDB" id="5WNH">
    <property type="method" value="X-ray"/>
    <property type="resolution" value="3.10 A"/>
    <property type="chains" value="A/B/C/D=6-415"/>
</dbReference>
<dbReference type="PDB" id="6E9W">
    <property type="method" value="X-ray"/>
    <property type="resolution" value="2.96 A"/>
    <property type="chains" value="A/B=6-415"/>
</dbReference>
<dbReference type="PDB" id="7JOU">
    <property type="method" value="X-ray"/>
    <property type="resolution" value="3.32 A"/>
    <property type="chains" value="A=6-415"/>
</dbReference>
<dbReference type="PDB" id="7S25">
    <property type="method" value="X-ray"/>
    <property type="resolution" value="2.34 A"/>
    <property type="chains" value="A/B/C/D=7-402"/>
</dbReference>
<dbReference type="PDB" id="7S26">
    <property type="method" value="X-ray"/>
    <property type="resolution" value="2.74 A"/>
    <property type="chains" value="A/B/C/D=6-402"/>
</dbReference>
<dbReference type="PDB" id="8P0S">
    <property type="method" value="X-ray"/>
    <property type="resolution" value="2.20 A"/>
    <property type="chains" value="A/B=420-550"/>
</dbReference>
<dbReference type="PDB" id="8ZH5">
    <property type="method" value="X-ray"/>
    <property type="resolution" value="3.70 A"/>
    <property type="chains" value="A=6-415"/>
</dbReference>
<dbReference type="PDBsum" id="1S1C"/>
<dbReference type="PDBsum" id="2ESM"/>
<dbReference type="PDBsum" id="2ETK"/>
<dbReference type="PDBsum" id="2ETR"/>
<dbReference type="PDBsum" id="2V55"/>
<dbReference type="PDBsum" id="3D9V"/>
<dbReference type="PDBsum" id="3NCZ"/>
<dbReference type="PDBsum" id="3NDM"/>
<dbReference type="PDBsum" id="3O0Z"/>
<dbReference type="PDBsum" id="3TV7"/>
<dbReference type="PDBsum" id="3TWJ"/>
<dbReference type="PDBsum" id="3V8S"/>
<dbReference type="PDBsum" id="4L2W"/>
<dbReference type="PDBsum" id="4W7P"/>
<dbReference type="PDBsum" id="4YVC"/>
<dbReference type="PDBsum" id="4YVE"/>
<dbReference type="PDBsum" id="5BML"/>
<dbReference type="PDBsum" id="5F5P"/>
<dbReference type="PDBsum" id="5HVU"/>
<dbReference type="PDBsum" id="5KKS"/>
<dbReference type="PDBsum" id="5KKT"/>
<dbReference type="PDBsum" id="5UZJ"/>
<dbReference type="PDBsum" id="5WNE"/>
<dbReference type="PDBsum" id="5WNF"/>
<dbReference type="PDBsum" id="5WNG"/>
<dbReference type="PDBsum" id="5WNH"/>
<dbReference type="PDBsum" id="6E9W"/>
<dbReference type="PDBsum" id="7JOU"/>
<dbReference type="PDBsum" id="7S25"/>
<dbReference type="PDBsum" id="7S26"/>
<dbReference type="PDBsum" id="8P0S"/>
<dbReference type="PDBsum" id="8ZH5"/>
<dbReference type="SMR" id="Q13464"/>
<dbReference type="BioGRID" id="112020">
    <property type="interactions" value="173"/>
</dbReference>
<dbReference type="CORUM" id="Q13464"/>
<dbReference type="DIP" id="DIP-35645N"/>
<dbReference type="ELM" id="Q13464"/>
<dbReference type="FunCoup" id="Q13464">
    <property type="interactions" value="3581"/>
</dbReference>
<dbReference type="IntAct" id="Q13464">
    <property type="interactions" value="57"/>
</dbReference>
<dbReference type="MINT" id="Q13464"/>
<dbReference type="STRING" id="9606.ENSP00000382697"/>
<dbReference type="BindingDB" id="Q13464"/>
<dbReference type="ChEMBL" id="CHEMBL3231"/>
<dbReference type="DrugBank" id="DB07876">
    <property type="generic name" value="(S)-2-METHYL-1-[(4-METHYL-5-ISOQUINOLINE)SULFONYL]-HOMOPIPERAZINE"/>
</dbReference>
<dbReference type="DrugBank" id="DB16703">
    <property type="generic name" value="Belumosudil"/>
</dbReference>
<dbReference type="DrugBank" id="DB03777">
    <property type="generic name" value="Bisindolylmaleimide I"/>
</dbReference>
<dbReference type="DrugBank" id="DB12429">
    <property type="generic name" value="CI-1040"/>
</dbReference>
<dbReference type="DrugBank" id="DB08162">
    <property type="generic name" value="Fasudil"/>
</dbReference>
<dbReference type="DrugBank" id="DB04707">
    <property type="generic name" value="Hydroxyfasudil"/>
</dbReference>
<dbReference type="DrugBank" id="DB13931">
    <property type="generic name" value="Netarsudil"/>
</dbReference>
<dbReference type="DrugBank" id="DB13165">
    <property type="generic name" value="Ripasudil"/>
</dbReference>
<dbReference type="DrugBank" id="DB04462">
    <property type="generic name" value="Tetrabromo-2-Benzotriazole"/>
</dbReference>
<dbReference type="DrugBank" id="DB08756">
    <property type="generic name" value="Y-27632"/>
</dbReference>
<dbReference type="DrugCentral" id="Q13464"/>
<dbReference type="GuidetoPHARMACOLOGY" id="1503"/>
<dbReference type="GlyCosmos" id="Q13464">
    <property type="glycosylation" value="1 site, 1 glycan"/>
</dbReference>
<dbReference type="GlyGen" id="Q13464">
    <property type="glycosylation" value="3 sites, 1 O-linked glycan (3 sites)"/>
</dbReference>
<dbReference type="iPTMnet" id="Q13464"/>
<dbReference type="MetOSite" id="Q13464"/>
<dbReference type="PhosphoSitePlus" id="Q13464"/>
<dbReference type="SwissPalm" id="Q13464"/>
<dbReference type="BioMuta" id="ROCK1"/>
<dbReference type="DMDM" id="47605999"/>
<dbReference type="CPTAC" id="CPTAC-2877"/>
<dbReference type="jPOST" id="Q13464"/>
<dbReference type="MassIVE" id="Q13464"/>
<dbReference type="PaxDb" id="9606-ENSP00000382697"/>
<dbReference type="PeptideAtlas" id="Q13464"/>
<dbReference type="ProteomicsDB" id="59461"/>
<dbReference type="Pumba" id="Q13464"/>
<dbReference type="Antibodypedia" id="1128">
    <property type="antibodies" value="691 antibodies from 48 providers"/>
</dbReference>
<dbReference type="DNASU" id="6093"/>
<dbReference type="Ensembl" id="ENST00000399799.3">
    <property type="protein sequence ID" value="ENSP00000382697.1"/>
    <property type="gene ID" value="ENSG00000067900.9"/>
</dbReference>
<dbReference type="GeneID" id="6093"/>
<dbReference type="KEGG" id="hsa:6093"/>
<dbReference type="MANE-Select" id="ENST00000399799.3">
    <property type="protein sequence ID" value="ENSP00000382697.1"/>
    <property type="RefSeq nucleotide sequence ID" value="NM_005406.3"/>
    <property type="RefSeq protein sequence ID" value="NP_005397.1"/>
</dbReference>
<dbReference type="UCSC" id="uc002kte.4">
    <property type="organism name" value="human"/>
</dbReference>
<dbReference type="AGR" id="HGNC:10251"/>
<dbReference type="CTD" id="6093"/>
<dbReference type="DisGeNET" id="6093"/>
<dbReference type="GeneCards" id="ROCK1"/>
<dbReference type="HGNC" id="HGNC:10251">
    <property type="gene designation" value="ROCK1"/>
</dbReference>
<dbReference type="HPA" id="ENSG00000067900">
    <property type="expression patterns" value="Low tissue specificity"/>
</dbReference>
<dbReference type="MIM" id="601702">
    <property type="type" value="gene"/>
</dbReference>
<dbReference type="neXtProt" id="NX_Q13464"/>
<dbReference type="OpenTargets" id="ENSG00000067900"/>
<dbReference type="PharmGKB" id="PA34623"/>
<dbReference type="VEuPathDB" id="HostDB:ENSG00000067900"/>
<dbReference type="eggNOG" id="KOG0612">
    <property type="taxonomic scope" value="Eukaryota"/>
</dbReference>
<dbReference type="GeneTree" id="ENSGT01030000234517"/>
<dbReference type="HOGENOM" id="CLU_000288_140_0_1"/>
<dbReference type="InParanoid" id="Q13464"/>
<dbReference type="OMA" id="XETLATQ"/>
<dbReference type="OrthoDB" id="3638488at2759"/>
<dbReference type="PAN-GO" id="Q13464">
    <property type="GO annotations" value="11 GO annotations based on evolutionary models"/>
</dbReference>
<dbReference type="PhylomeDB" id="Q13464"/>
<dbReference type="TreeFam" id="TF313551"/>
<dbReference type="PathwayCommons" id="Q13464"/>
<dbReference type="Reactome" id="R-HSA-111465">
    <property type="pathway name" value="Apoptotic cleavage of cellular proteins"/>
</dbReference>
<dbReference type="Reactome" id="R-HSA-3928662">
    <property type="pathway name" value="EPHB-mediated forward signaling"/>
</dbReference>
<dbReference type="Reactome" id="R-HSA-3928663">
    <property type="pathway name" value="EPHA-mediated growth cone collapse"/>
</dbReference>
<dbReference type="Reactome" id="R-HSA-416482">
    <property type="pathway name" value="G alpha (12/13) signalling events"/>
</dbReference>
<dbReference type="Reactome" id="R-HSA-416572">
    <property type="pathway name" value="Sema4D induced cell migration and growth-cone collapse"/>
</dbReference>
<dbReference type="Reactome" id="R-HSA-4420097">
    <property type="pathway name" value="VEGFA-VEGFR2 Pathway"/>
</dbReference>
<dbReference type="Reactome" id="R-HSA-5627117">
    <property type="pathway name" value="RHO GTPases Activate ROCKs"/>
</dbReference>
<dbReference type="Reactome" id="R-HSA-6798695">
    <property type="pathway name" value="Neutrophil degranulation"/>
</dbReference>
<dbReference type="Reactome" id="R-HSA-8980692">
    <property type="pathway name" value="RHOA GTPase cycle"/>
</dbReference>
<dbReference type="Reactome" id="R-HSA-9013026">
    <property type="pathway name" value="RHOB GTPase cycle"/>
</dbReference>
<dbReference type="Reactome" id="R-HSA-9013106">
    <property type="pathway name" value="RHOC GTPase cycle"/>
</dbReference>
<dbReference type="Reactome" id="R-HSA-9013407">
    <property type="pathway name" value="RHOH GTPase cycle"/>
</dbReference>
<dbReference type="Reactome" id="R-HSA-9013422">
    <property type="pathway name" value="RHOBTB1 GTPase cycle"/>
</dbReference>
<dbReference type="Reactome" id="R-HSA-9679191">
    <property type="pathway name" value="Potential therapeutics for SARS"/>
</dbReference>
<dbReference type="Reactome" id="R-HSA-9696264">
    <property type="pathway name" value="RND3 GTPase cycle"/>
</dbReference>
<dbReference type="SABIO-RK" id="Q13464"/>
<dbReference type="SignaLink" id="Q13464"/>
<dbReference type="SIGNOR" id="Q13464"/>
<dbReference type="BioGRID-ORCS" id="6093">
    <property type="hits" value="26 hits in 1191 CRISPR screens"/>
</dbReference>
<dbReference type="CD-CODE" id="8C2F96ED">
    <property type="entry name" value="Centrosome"/>
</dbReference>
<dbReference type="CD-CODE" id="DEE660B4">
    <property type="entry name" value="Stress granule"/>
</dbReference>
<dbReference type="CD-CODE" id="FB4E32DD">
    <property type="entry name" value="Presynaptic clusters and postsynaptic densities"/>
</dbReference>
<dbReference type="ChiTaRS" id="ROCK1">
    <property type="organism name" value="human"/>
</dbReference>
<dbReference type="EvolutionaryTrace" id="Q13464"/>
<dbReference type="GeneWiki" id="ROCK1"/>
<dbReference type="GenomeRNAi" id="6093"/>
<dbReference type="Pharos" id="Q13464">
    <property type="development level" value="Tclin"/>
</dbReference>
<dbReference type="PRO" id="PR:Q13464"/>
<dbReference type="Proteomes" id="UP000005640">
    <property type="component" value="Chromosome 18"/>
</dbReference>
<dbReference type="RNAct" id="Q13464">
    <property type="molecule type" value="protein"/>
</dbReference>
<dbReference type="Bgee" id="ENSG00000067900">
    <property type="expression patterns" value="Expressed in calcaneal tendon and 97 other cell types or tissues"/>
</dbReference>
<dbReference type="ExpressionAtlas" id="Q13464">
    <property type="expression patterns" value="baseline and differential"/>
</dbReference>
<dbReference type="GO" id="GO:0032059">
    <property type="term" value="C:bleb"/>
    <property type="evidence" value="ECO:0007669"/>
    <property type="project" value="UniProtKB-SubCell"/>
</dbReference>
<dbReference type="GO" id="GO:0005814">
    <property type="term" value="C:centriole"/>
    <property type="evidence" value="ECO:0007669"/>
    <property type="project" value="UniProtKB-SubCell"/>
</dbReference>
<dbReference type="GO" id="GO:0005737">
    <property type="term" value="C:cytoplasm"/>
    <property type="evidence" value="ECO:0000318"/>
    <property type="project" value="GO_Central"/>
</dbReference>
<dbReference type="GO" id="GO:0010494">
    <property type="term" value="C:cytoplasmic stress granule"/>
    <property type="evidence" value="ECO:0000250"/>
    <property type="project" value="ARUK-UCL"/>
</dbReference>
<dbReference type="GO" id="GO:0005856">
    <property type="term" value="C:cytoskeleton"/>
    <property type="evidence" value="ECO:0000250"/>
    <property type="project" value="UniProtKB"/>
</dbReference>
<dbReference type="GO" id="GO:0005829">
    <property type="term" value="C:cytosol"/>
    <property type="evidence" value="ECO:0000304"/>
    <property type="project" value="Reactome"/>
</dbReference>
<dbReference type="GO" id="GO:0005576">
    <property type="term" value="C:extracellular region"/>
    <property type="evidence" value="ECO:0000304"/>
    <property type="project" value="Reactome"/>
</dbReference>
<dbReference type="GO" id="GO:0000139">
    <property type="term" value="C:Golgi membrane"/>
    <property type="evidence" value="ECO:0007669"/>
    <property type="project" value="UniProtKB-SubCell"/>
</dbReference>
<dbReference type="GO" id="GO:0030027">
    <property type="term" value="C:lamellipodium"/>
    <property type="evidence" value="ECO:0000250"/>
    <property type="project" value="UniProtKB"/>
</dbReference>
<dbReference type="GO" id="GO:0005886">
    <property type="term" value="C:plasma membrane"/>
    <property type="evidence" value="ECO:0000250"/>
    <property type="project" value="UniProtKB"/>
</dbReference>
<dbReference type="GO" id="GO:0001726">
    <property type="term" value="C:ruffle"/>
    <property type="evidence" value="ECO:0000250"/>
    <property type="project" value="UniProtKB"/>
</dbReference>
<dbReference type="GO" id="GO:0098685">
    <property type="term" value="C:Schaffer collateral - CA1 synapse"/>
    <property type="evidence" value="ECO:0007669"/>
    <property type="project" value="Ensembl"/>
</dbReference>
<dbReference type="GO" id="GO:0034774">
    <property type="term" value="C:secretory granule lumen"/>
    <property type="evidence" value="ECO:0000304"/>
    <property type="project" value="Reactome"/>
</dbReference>
<dbReference type="GO" id="GO:0005524">
    <property type="term" value="F:ATP binding"/>
    <property type="evidence" value="ECO:0007669"/>
    <property type="project" value="UniProtKB-KW"/>
</dbReference>
<dbReference type="GO" id="GO:0106310">
    <property type="term" value="F:protein serine kinase activity"/>
    <property type="evidence" value="ECO:0007669"/>
    <property type="project" value="RHEA"/>
</dbReference>
<dbReference type="GO" id="GO:0004674">
    <property type="term" value="F:protein serine/threonine kinase activity"/>
    <property type="evidence" value="ECO:0000314"/>
    <property type="project" value="UniProtKB"/>
</dbReference>
<dbReference type="GO" id="GO:0072518">
    <property type="term" value="F:Rho-dependent protein serine/threonine kinase activity"/>
    <property type="evidence" value="ECO:0000314"/>
    <property type="project" value="UniProtKB"/>
</dbReference>
<dbReference type="GO" id="GO:0031267">
    <property type="term" value="F:small GTPase binding"/>
    <property type="evidence" value="ECO:0007669"/>
    <property type="project" value="InterPro"/>
</dbReference>
<dbReference type="GO" id="GO:0048156">
    <property type="term" value="F:tau protein binding"/>
    <property type="evidence" value="ECO:0000303"/>
    <property type="project" value="ARUK-UCL"/>
</dbReference>
<dbReference type="GO" id="GO:0050321">
    <property type="term" value="F:tau-protein kinase activity"/>
    <property type="evidence" value="ECO:0000303"/>
    <property type="project" value="ARUK-UCL"/>
</dbReference>
<dbReference type="GO" id="GO:0008270">
    <property type="term" value="F:zinc ion binding"/>
    <property type="evidence" value="ECO:0007669"/>
    <property type="project" value="UniProtKB-KW"/>
</dbReference>
<dbReference type="GO" id="GO:0030036">
    <property type="term" value="P:actin cytoskeleton organization"/>
    <property type="evidence" value="ECO:0000250"/>
    <property type="project" value="BHF-UCL"/>
</dbReference>
<dbReference type="GO" id="GO:0031032">
    <property type="term" value="P:actomyosin structure organization"/>
    <property type="evidence" value="ECO:0000318"/>
    <property type="project" value="GO_Central"/>
</dbReference>
<dbReference type="GO" id="GO:0003180">
    <property type="term" value="P:aortic valve morphogenesis"/>
    <property type="evidence" value="ECO:0000250"/>
    <property type="project" value="BHF-UCL"/>
</dbReference>
<dbReference type="GO" id="GO:0003383">
    <property type="term" value="P:apical constriction"/>
    <property type="evidence" value="ECO:0007669"/>
    <property type="project" value="Ensembl"/>
</dbReference>
<dbReference type="GO" id="GO:0032060">
    <property type="term" value="P:bleb assembly"/>
    <property type="evidence" value="ECO:0007669"/>
    <property type="project" value="Ensembl"/>
</dbReference>
<dbReference type="GO" id="GO:0097746">
    <property type="term" value="P:blood vessel diameter maintenance"/>
    <property type="evidence" value="ECO:0000250"/>
    <property type="project" value="ARUK-UCL"/>
</dbReference>
<dbReference type="GO" id="GO:0030866">
    <property type="term" value="P:cortical actin cytoskeleton organization"/>
    <property type="evidence" value="ECO:0000318"/>
    <property type="project" value="GO_Central"/>
</dbReference>
<dbReference type="GO" id="GO:0048598">
    <property type="term" value="P:embryonic morphogenesis"/>
    <property type="evidence" value="ECO:0000318"/>
    <property type="project" value="GO_Central"/>
</dbReference>
<dbReference type="GO" id="GO:0001837">
    <property type="term" value="P:epithelial to mesenchymal transition"/>
    <property type="evidence" value="ECO:0000250"/>
    <property type="project" value="BHF-UCL"/>
</dbReference>
<dbReference type="GO" id="GO:0035556">
    <property type="term" value="P:intracellular signal transduction"/>
    <property type="evidence" value="ECO:0000315"/>
    <property type="project" value="ARUK-UCL"/>
</dbReference>
<dbReference type="GO" id="GO:0007159">
    <property type="term" value="P:leukocyte cell-cell adhesion"/>
    <property type="evidence" value="ECO:0000314"/>
    <property type="project" value="BHF-UCL"/>
</dbReference>
<dbReference type="GO" id="GO:0050900">
    <property type="term" value="P:leukocyte migration"/>
    <property type="evidence" value="ECO:0000314"/>
    <property type="project" value="BHF-UCL"/>
</dbReference>
<dbReference type="GO" id="GO:0050901">
    <property type="term" value="P:leukocyte tethering or rolling"/>
    <property type="evidence" value="ECO:0000314"/>
    <property type="project" value="BHF-UCL"/>
</dbReference>
<dbReference type="GO" id="GO:0022614">
    <property type="term" value="P:membrane to membrane docking"/>
    <property type="evidence" value="ECO:0000314"/>
    <property type="project" value="BHF-UCL"/>
</dbReference>
<dbReference type="GO" id="GO:0000281">
    <property type="term" value="P:mitotic cytokinesis"/>
    <property type="evidence" value="ECO:0000318"/>
    <property type="project" value="GO_Central"/>
</dbReference>
<dbReference type="GO" id="GO:0097049">
    <property type="term" value="P:motor neuron apoptotic process"/>
    <property type="evidence" value="ECO:0007669"/>
    <property type="project" value="Ensembl"/>
</dbReference>
<dbReference type="GO" id="GO:0061157">
    <property type="term" value="P:mRNA destabilization"/>
    <property type="evidence" value="ECO:0000250"/>
    <property type="project" value="ARUK-UCL"/>
</dbReference>
<dbReference type="GO" id="GO:0051451">
    <property type="term" value="P:myoblast migration"/>
    <property type="evidence" value="ECO:0000250"/>
    <property type="project" value="UniProtKB"/>
</dbReference>
<dbReference type="GO" id="GO:1902992">
    <property type="term" value="P:negative regulation of amyloid precursor protein catabolic process"/>
    <property type="evidence" value="ECO:0000315"/>
    <property type="project" value="ARUK-UCL"/>
</dbReference>
<dbReference type="GO" id="GO:1902430">
    <property type="term" value="P:negative regulation of amyloid-beta formation"/>
    <property type="evidence" value="ECO:0000315"/>
    <property type="project" value="ARUK-UCL"/>
</dbReference>
<dbReference type="GO" id="GO:0016525">
    <property type="term" value="P:negative regulation of angiogenesis"/>
    <property type="evidence" value="ECO:0000315"/>
    <property type="project" value="UniProtKB"/>
</dbReference>
<dbReference type="GO" id="GO:1903347">
    <property type="term" value="P:negative regulation of bicellular tight junction assembly"/>
    <property type="evidence" value="ECO:0000316"/>
    <property type="project" value="UniProtKB"/>
</dbReference>
<dbReference type="GO" id="GO:0070168">
    <property type="term" value="P:negative regulation of biomineral tissue development"/>
    <property type="evidence" value="ECO:0000250"/>
    <property type="project" value="BHF-UCL"/>
</dbReference>
<dbReference type="GO" id="GO:0051045">
    <property type="term" value="P:negative regulation of membrane protein ectodomain proteolysis"/>
    <property type="evidence" value="ECO:0000304"/>
    <property type="project" value="ARUK-UCL"/>
</dbReference>
<dbReference type="GO" id="GO:2000672">
    <property type="term" value="P:negative regulation of motor neuron apoptotic process"/>
    <property type="evidence" value="ECO:0007669"/>
    <property type="project" value="Ensembl"/>
</dbReference>
<dbReference type="GO" id="GO:0032091">
    <property type="term" value="P:negative regulation of protein binding"/>
    <property type="evidence" value="ECO:0000314"/>
    <property type="project" value="UniProtKB"/>
</dbReference>
<dbReference type="GO" id="GO:0140058">
    <property type="term" value="P:neuron projection arborization"/>
    <property type="evidence" value="ECO:0000316"/>
    <property type="project" value="ARUK-UCL"/>
</dbReference>
<dbReference type="GO" id="GO:0031175">
    <property type="term" value="P:neuron projection development"/>
    <property type="evidence" value="ECO:0000316"/>
    <property type="project" value="ARUK-UCL"/>
</dbReference>
<dbReference type="GO" id="GO:0018105">
    <property type="term" value="P:peptidyl-serine phosphorylation"/>
    <property type="evidence" value="ECO:0000314"/>
    <property type="project" value="UniProtKB"/>
</dbReference>
<dbReference type="GO" id="GO:0090521">
    <property type="term" value="P:podocyte cell migration"/>
    <property type="evidence" value="ECO:0000250"/>
    <property type="project" value="UniProtKB"/>
</dbReference>
<dbReference type="GO" id="GO:1900223">
    <property type="term" value="P:positive regulation of amyloid-beta clearance"/>
    <property type="evidence" value="ECO:0000316"/>
    <property type="project" value="ARUK-UCL"/>
</dbReference>
<dbReference type="GO" id="GO:0010508">
    <property type="term" value="P:positive regulation of autophagy"/>
    <property type="evidence" value="ECO:0000316"/>
    <property type="project" value="ARUK-UCL"/>
</dbReference>
<dbReference type="GO" id="GO:0010613">
    <property type="term" value="P:positive regulation of cardiac muscle hypertrophy"/>
    <property type="evidence" value="ECO:0000315"/>
    <property type="project" value="ARUK-UCL"/>
</dbReference>
<dbReference type="GO" id="GO:1905205">
    <property type="term" value="P:positive regulation of connective tissue replacement"/>
    <property type="evidence" value="ECO:0000315"/>
    <property type="project" value="ARUK-UCL"/>
</dbReference>
<dbReference type="GO" id="GO:0051894">
    <property type="term" value="P:positive regulation of focal adhesion assembly"/>
    <property type="evidence" value="ECO:0000250"/>
    <property type="project" value="UniProtKB"/>
</dbReference>
<dbReference type="GO" id="GO:0010628">
    <property type="term" value="P:positive regulation of gene expression"/>
    <property type="evidence" value="ECO:0000315"/>
    <property type="project" value="ARUK-UCL"/>
</dbReference>
<dbReference type="GO" id="GO:0043410">
    <property type="term" value="P:positive regulation of MAPK cascade"/>
    <property type="evidence" value="ECO:0000315"/>
    <property type="project" value="ARUK-UCL"/>
</dbReference>
<dbReference type="GO" id="GO:0072659">
    <property type="term" value="P:protein localization to plasma membrane"/>
    <property type="evidence" value="ECO:0000315"/>
    <property type="project" value="UniProtKB"/>
</dbReference>
<dbReference type="GO" id="GO:0032956">
    <property type="term" value="P:regulation of actin cytoskeleton organization"/>
    <property type="evidence" value="ECO:0000314"/>
    <property type="project" value="UniProtKB"/>
</dbReference>
<dbReference type="GO" id="GO:0110061">
    <property type="term" value="P:regulation of angiotensin-activated signaling pathway"/>
    <property type="evidence" value="ECO:0000315"/>
    <property type="project" value="ARUK-UCL"/>
</dbReference>
<dbReference type="GO" id="GO:0030155">
    <property type="term" value="P:regulation of cell adhesion"/>
    <property type="evidence" value="ECO:0000304"/>
    <property type="project" value="UniProtKB"/>
</dbReference>
<dbReference type="GO" id="GO:1901888">
    <property type="term" value="P:regulation of cell junction assembly"/>
    <property type="evidence" value="ECO:0000318"/>
    <property type="project" value="GO_Central"/>
</dbReference>
<dbReference type="GO" id="GO:0030334">
    <property type="term" value="P:regulation of cell migration"/>
    <property type="evidence" value="ECO:0000314"/>
    <property type="project" value="UniProtKB"/>
</dbReference>
<dbReference type="GO" id="GO:2000145">
    <property type="term" value="P:regulation of cell motility"/>
    <property type="evidence" value="ECO:0000304"/>
    <property type="project" value="UniProtKB"/>
</dbReference>
<dbReference type="GO" id="GO:2000114">
    <property type="term" value="P:regulation of establishment of cell polarity"/>
    <property type="evidence" value="ECO:0000304"/>
    <property type="project" value="UniProtKB"/>
</dbReference>
<dbReference type="GO" id="GO:1903140">
    <property type="term" value="P:regulation of establishment of endothelial barrier"/>
    <property type="evidence" value="ECO:0000315"/>
    <property type="project" value="UniProtKB"/>
</dbReference>
<dbReference type="GO" id="GO:0051893">
    <property type="term" value="P:regulation of focal adhesion assembly"/>
    <property type="evidence" value="ECO:0000304"/>
    <property type="project" value="UniProtKB"/>
</dbReference>
<dbReference type="GO" id="GO:0045616">
    <property type="term" value="P:regulation of keratinocyte differentiation"/>
    <property type="evidence" value="ECO:0000315"/>
    <property type="project" value="UniProtKB"/>
</dbReference>
<dbReference type="GO" id="GO:0070507">
    <property type="term" value="P:regulation of microtubule cytoskeleton organization"/>
    <property type="evidence" value="ECO:0000314"/>
    <property type="project" value="UniProtKB"/>
</dbReference>
<dbReference type="GO" id="GO:0045664">
    <property type="term" value="P:regulation of neuron differentiation"/>
    <property type="evidence" value="ECO:0000316"/>
    <property type="project" value="ARUK-UCL"/>
</dbReference>
<dbReference type="GO" id="GO:0051492">
    <property type="term" value="P:regulation of stress fiber assembly"/>
    <property type="evidence" value="ECO:0000304"/>
    <property type="project" value="UniProtKB"/>
</dbReference>
<dbReference type="GO" id="GO:0090128">
    <property type="term" value="P:regulation of synapse maturation"/>
    <property type="evidence" value="ECO:0007669"/>
    <property type="project" value="Ensembl"/>
</dbReference>
<dbReference type="GO" id="GO:1900242">
    <property type="term" value="P:regulation of synaptic vesicle endocytosis"/>
    <property type="evidence" value="ECO:0000316"/>
    <property type="project" value="ARUK-UCL"/>
</dbReference>
<dbReference type="GO" id="GO:1990776">
    <property type="term" value="P:response to angiotensin"/>
    <property type="evidence" value="ECO:0000250"/>
    <property type="project" value="ARUK-UCL"/>
</dbReference>
<dbReference type="GO" id="GO:0071559">
    <property type="term" value="P:response to transforming growth factor beta"/>
    <property type="evidence" value="ECO:0000250"/>
    <property type="project" value="ARUK-UCL"/>
</dbReference>
<dbReference type="GO" id="GO:0007266">
    <property type="term" value="P:Rho protein signal transduction"/>
    <property type="evidence" value="ECO:0000316"/>
    <property type="project" value="ARUK-UCL"/>
</dbReference>
<dbReference type="GO" id="GO:0007165">
    <property type="term" value="P:signal transduction"/>
    <property type="evidence" value="ECO:0000304"/>
    <property type="project" value="ProtInc"/>
</dbReference>
<dbReference type="GO" id="GO:0006939">
    <property type="term" value="P:smooth muscle contraction"/>
    <property type="evidence" value="ECO:0000304"/>
    <property type="project" value="UniProtKB"/>
</dbReference>
<dbReference type="CDD" id="cd20874">
    <property type="entry name" value="C1_ROCK1"/>
    <property type="match status" value="1"/>
</dbReference>
<dbReference type="CDD" id="cd11639">
    <property type="entry name" value="HR1_ROCK1"/>
    <property type="match status" value="1"/>
</dbReference>
<dbReference type="CDD" id="cd01242">
    <property type="entry name" value="PH_ROCK"/>
    <property type="match status" value="1"/>
</dbReference>
<dbReference type="CDD" id="cd22250">
    <property type="entry name" value="ROCK_SBD"/>
    <property type="match status" value="1"/>
</dbReference>
<dbReference type="CDD" id="cd05622">
    <property type="entry name" value="STKc_ROCK1"/>
    <property type="match status" value="1"/>
</dbReference>
<dbReference type="DisProt" id="DP02365"/>
<dbReference type="FunFam" id="1.10.510.10:FF:000047">
    <property type="entry name" value="Rho-associated protein kinase 1"/>
    <property type="match status" value="1"/>
</dbReference>
<dbReference type="FunFam" id="1.20.5.340:FF:000023">
    <property type="entry name" value="Rho-associated protein kinase 1"/>
    <property type="match status" value="1"/>
</dbReference>
<dbReference type="FunFam" id="3.30.60.20:FF:000036">
    <property type="entry name" value="Rho-associated protein kinase 1"/>
    <property type="match status" value="1"/>
</dbReference>
<dbReference type="FunFam" id="2.30.29.30:FF:000033">
    <property type="entry name" value="Rho-associated protein kinase 2"/>
    <property type="match status" value="1"/>
</dbReference>
<dbReference type="FunFam" id="3.30.200.20:FF:000072">
    <property type="entry name" value="Rho-associated protein kinase 2"/>
    <property type="match status" value="1"/>
</dbReference>
<dbReference type="FunFam" id="1.20.5.730:FF:000001">
    <property type="entry name" value="rho-associated protein kinase 2"/>
    <property type="match status" value="1"/>
</dbReference>
<dbReference type="FunFam" id="3.30.200.20:FF:001759">
    <property type="entry name" value="Rho-associated, coiled-coil-containing protein kinase 2b"/>
    <property type="match status" value="1"/>
</dbReference>
<dbReference type="Gene3D" id="1.20.5.340">
    <property type="match status" value="1"/>
</dbReference>
<dbReference type="Gene3D" id="3.30.60.20">
    <property type="match status" value="1"/>
</dbReference>
<dbReference type="Gene3D" id="3.30.200.20">
    <property type="entry name" value="Phosphorylase Kinase, domain 1"/>
    <property type="match status" value="1"/>
</dbReference>
<dbReference type="Gene3D" id="2.30.29.30">
    <property type="entry name" value="Pleckstrin-homology domain (PH domain)/Phosphotyrosine-binding domain (PTB)"/>
    <property type="match status" value="1"/>
</dbReference>
<dbReference type="Gene3D" id="1.20.5.730">
    <property type="entry name" value="Single helix bin"/>
    <property type="match status" value="1"/>
</dbReference>
<dbReference type="Gene3D" id="1.10.510.10">
    <property type="entry name" value="Transferase(Phosphotransferase) domain 1"/>
    <property type="match status" value="1"/>
</dbReference>
<dbReference type="InterPro" id="IPR000961">
    <property type="entry name" value="AGC-kinase_C"/>
</dbReference>
<dbReference type="InterPro" id="IPR046349">
    <property type="entry name" value="C1-like_sf"/>
</dbReference>
<dbReference type="InterPro" id="IPR011072">
    <property type="entry name" value="HR1_rho-bd"/>
</dbReference>
<dbReference type="InterPro" id="IPR011009">
    <property type="entry name" value="Kinase-like_dom_sf"/>
</dbReference>
<dbReference type="InterPro" id="IPR002219">
    <property type="entry name" value="PE/DAG-bd"/>
</dbReference>
<dbReference type="InterPro" id="IPR011993">
    <property type="entry name" value="PH-like_dom_sf"/>
</dbReference>
<dbReference type="InterPro" id="IPR001849">
    <property type="entry name" value="PH_domain"/>
</dbReference>
<dbReference type="InterPro" id="IPR000719">
    <property type="entry name" value="Prot_kinase_dom"/>
</dbReference>
<dbReference type="InterPro" id="IPR017441">
    <property type="entry name" value="Protein_kinase_ATP_BS"/>
</dbReference>
<dbReference type="InterPro" id="IPR050839">
    <property type="entry name" value="Rho-assoc_Ser/Thr_Kinase"/>
</dbReference>
<dbReference type="InterPro" id="IPR020684">
    <property type="entry name" value="ROCK1/ROCK2"/>
</dbReference>
<dbReference type="InterPro" id="IPR037310">
    <property type="entry name" value="ROCK1_HR1"/>
</dbReference>
<dbReference type="InterPro" id="IPR015008">
    <property type="entry name" value="ROCK_Rho-bd_dom"/>
</dbReference>
<dbReference type="InterPro" id="IPR008271">
    <property type="entry name" value="Ser/Thr_kinase_AS"/>
</dbReference>
<dbReference type="PANTHER" id="PTHR22988">
    <property type="entry name" value="MYOTONIC DYSTROPHY S/T KINASE-RELATED"/>
    <property type="match status" value="1"/>
</dbReference>
<dbReference type="PANTHER" id="PTHR22988:SF33">
    <property type="entry name" value="RHO-ASSOCIATED PROTEIN KINASE 1"/>
    <property type="match status" value="1"/>
</dbReference>
<dbReference type="Pfam" id="PF25346">
    <property type="entry name" value="PH_MRCK"/>
    <property type="match status" value="1"/>
</dbReference>
<dbReference type="Pfam" id="PF00069">
    <property type="entry name" value="Pkinase"/>
    <property type="match status" value="1"/>
</dbReference>
<dbReference type="Pfam" id="PF08912">
    <property type="entry name" value="Rho_Binding"/>
    <property type="match status" value="1"/>
</dbReference>
<dbReference type="PIRSF" id="PIRSF037568">
    <property type="entry name" value="Rho_kinase"/>
    <property type="match status" value="1"/>
</dbReference>
<dbReference type="SMART" id="SM00109">
    <property type="entry name" value="C1"/>
    <property type="match status" value="1"/>
</dbReference>
<dbReference type="SMART" id="SM00233">
    <property type="entry name" value="PH"/>
    <property type="match status" value="1"/>
</dbReference>
<dbReference type="SMART" id="SM00133">
    <property type="entry name" value="S_TK_X"/>
    <property type="match status" value="1"/>
</dbReference>
<dbReference type="SMART" id="SM00220">
    <property type="entry name" value="S_TKc"/>
    <property type="match status" value="1"/>
</dbReference>
<dbReference type="SUPFAM" id="SSF57889">
    <property type="entry name" value="Cysteine-rich domain"/>
    <property type="match status" value="1"/>
</dbReference>
<dbReference type="SUPFAM" id="SSF103652">
    <property type="entry name" value="G protein-binding domain"/>
    <property type="match status" value="1"/>
</dbReference>
<dbReference type="SUPFAM" id="SSF90257">
    <property type="entry name" value="Myosin rod fragments"/>
    <property type="match status" value="1"/>
</dbReference>
<dbReference type="SUPFAM" id="SSF50729">
    <property type="entry name" value="PH domain-like"/>
    <property type="match status" value="1"/>
</dbReference>
<dbReference type="SUPFAM" id="SSF56112">
    <property type="entry name" value="Protein kinase-like (PK-like)"/>
    <property type="match status" value="1"/>
</dbReference>
<dbReference type="PROSITE" id="PS51285">
    <property type="entry name" value="AGC_KINASE_CTER"/>
    <property type="match status" value="1"/>
</dbReference>
<dbReference type="PROSITE" id="PS50003">
    <property type="entry name" value="PH_DOMAIN"/>
    <property type="match status" value="1"/>
</dbReference>
<dbReference type="PROSITE" id="PS00107">
    <property type="entry name" value="PROTEIN_KINASE_ATP"/>
    <property type="match status" value="1"/>
</dbReference>
<dbReference type="PROSITE" id="PS50011">
    <property type="entry name" value="PROTEIN_KINASE_DOM"/>
    <property type="match status" value="1"/>
</dbReference>
<dbReference type="PROSITE" id="PS00108">
    <property type="entry name" value="PROTEIN_KINASE_ST"/>
    <property type="match status" value="1"/>
</dbReference>
<dbReference type="PROSITE" id="PS51860">
    <property type="entry name" value="REM_1"/>
    <property type="match status" value="1"/>
</dbReference>
<dbReference type="PROSITE" id="PS51859">
    <property type="entry name" value="RHO_BD"/>
    <property type="match status" value="1"/>
</dbReference>
<dbReference type="PROSITE" id="PS50081">
    <property type="entry name" value="ZF_DAG_PE_2"/>
    <property type="match status" value="1"/>
</dbReference>
<accession>Q13464</accession>
<accession>B0YJ91</accession>
<accession>Q2KHM4</accession>
<accession>Q59GZ4</accession>
<protein>
    <recommendedName>
        <fullName>Rho-associated protein kinase 1</fullName>
        <ecNumber evidence="12 13 14 32 33">2.7.11.1</ecNumber>
    </recommendedName>
    <alternativeName>
        <fullName>Renal carcinoma antigen NY-REN-35</fullName>
    </alternativeName>
    <alternativeName>
        <fullName>Rho-associated, coiled-coil-containing protein kinase 1</fullName>
    </alternativeName>
    <alternativeName>
        <fullName>Rho-associated, coiled-coil-containing protein kinase I</fullName>
        <shortName>ROCK-I</shortName>
    </alternativeName>
    <alternativeName>
        <fullName>p160 ROCK-1</fullName>
        <shortName>p160ROCK</shortName>
    </alternativeName>
</protein>
<organism>
    <name type="scientific">Homo sapiens</name>
    <name type="common">Human</name>
    <dbReference type="NCBI Taxonomy" id="9606"/>
    <lineage>
        <taxon>Eukaryota</taxon>
        <taxon>Metazoa</taxon>
        <taxon>Chordata</taxon>
        <taxon>Craniata</taxon>
        <taxon>Vertebrata</taxon>
        <taxon>Euteleostomi</taxon>
        <taxon>Mammalia</taxon>
        <taxon>Eutheria</taxon>
        <taxon>Euarchontoglires</taxon>
        <taxon>Primates</taxon>
        <taxon>Haplorrhini</taxon>
        <taxon>Catarrhini</taxon>
        <taxon>Hominidae</taxon>
        <taxon>Homo</taxon>
    </lineage>
</organism>
<proteinExistence type="evidence at protein level"/>
<reference key="1">
    <citation type="journal article" date="1996" name="EMBO J.">
        <title>The small GTP-binding protein Rho binds to and activates a 160 kDa Ser/Thr protein kinase homologous to myotonic dystrophy kinase.</title>
        <authorList>
            <person name="Ishizaki T."/>
            <person name="Maekawa M."/>
            <person name="Fujisawa K."/>
            <person name="Okawa K."/>
            <person name="Iwamatsu A."/>
            <person name="Fujita A."/>
            <person name="Watanabe N."/>
            <person name="Saito Y."/>
            <person name="Kakizuka A."/>
            <person name="Morii N."/>
            <person name="Narumiya S."/>
        </authorList>
    </citation>
    <scope>NUCLEOTIDE SEQUENCE [MRNA]</scope>
    <scope>PROTEIN SEQUENCE OF 187-195; 281-288; 465-473; 818-828; 885-893 AND 934-945</scope>
    <scope>FUNCTION</scope>
    <scope>PHOSPHORYLATION</scope>
    <scope>INTERACTION WITH RHOA</scope>
    <scope>SUBCELLULAR LOCATION</scope>
    <scope>TISSUE SPECIFICITY</scope>
    <source>
        <tissue>Leukemia</tissue>
    </source>
</reference>
<reference key="2">
    <citation type="submission" date="2007-02" db="EMBL/GenBank/DDBJ databases">
        <authorList>
            <consortium name="NHLBI resequencing and genotyping service (RS&amp;G)"/>
        </authorList>
    </citation>
    <scope>NUCLEOTIDE SEQUENCE [GENOMIC DNA]</scope>
</reference>
<reference key="3">
    <citation type="journal article" date="2004" name="Genome Res.">
        <title>The status, quality, and expansion of the NIH full-length cDNA project: the Mammalian Gene Collection (MGC).</title>
        <authorList>
            <consortium name="The MGC Project Team"/>
        </authorList>
    </citation>
    <scope>NUCLEOTIDE SEQUENCE [LARGE SCALE MRNA]</scope>
</reference>
<reference key="4">
    <citation type="submission" date="2009-03" db="UniProtKB">
        <authorList>
            <person name="Bienvenut W.V."/>
            <person name="Ramsay A."/>
            <person name="Leung H.Y."/>
        </authorList>
    </citation>
    <scope>PROTEIN SEQUENCE OF 2-13; 85-94; 327-334; 405-415 AND 546-563</scope>
    <scope>CLEAVAGE OF INITIATOR METHIONINE</scope>
    <scope>ACETYLATION AT SER-2</scope>
    <scope>IDENTIFICATION BY MASS SPECTROMETRY</scope>
    <source>
        <tissue>Embryonic kidney</tissue>
    </source>
</reference>
<reference key="5">
    <citation type="submission" date="2005-03" db="EMBL/GenBank/DDBJ databases">
        <authorList>
            <person name="Totoki Y."/>
            <person name="Toyoda A."/>
            <person name="Takeda T."/>
            <person name="Sakaki Y."/>
            <person name="Tanaka A."/>
            <person name="Yokoyama S."/>
            <person name="Ohara O."/>
            <person name="Nagase T."/>
            <person name="Kikuno R.F."/>
        </authorList>
    </citation>
    <scope>NUCLEOTIDE SEQUENCE [LARGE SCALE MRNA] OF 323-1027</scope>
    <source>
        <tissue>Brain</tissue>
    </source>
</reference>
<reference key="6">
    <citation type="journal article" date="1998" name="J. Biol. Chem.">
        <title>Different molecular mechanisms for Rho family GTPase-dependent, Ca2+-independent contraction of smooth muscle.</title>
        <authorList>
            <person name="Van Eyk J.E."/>
            <person name="Arrell D.K."/>
            <person name="Foster D.B."/>
            <person name="Strauss J.D."/>
            <person name="Heinonen T.Y."/>
            <person name="Furmaniak-Kazmierczak E."/>
            <person name="Cote G.P."/>
            <person name="Mak A.S."/>
        </authorList>
    </citation>
    <scope>ROLE IN SMOOTH MUSCLE CONTRACTION</scope>
</reference>
<reference key="7">
    <citation type="journal article" date="1999" name="Int. J. Cancer">
        <title>Antigens recognized by autologous antibody in patients with renal-cell carcinoma.</title>
        <authorList>
            <person name="Scanlan M.J."/>
            <person name="Gordan J.D."/>
            <person name="Williamson B."/>
            <person name="Stockert E."/>
            <person name="Bander N.H."/>
            <person name="Jongeneel C.V."/>
            <person name="Gure A.O."/>
            <person name="Jaeger D."/>
            <person name="Jaeger E."/>
            <person name="Knuth A."/>
            <person name="Chen Y.-T."/>
            <person name="Old L.J."/>
        </authorList>
    </citation>
    <scope>IDENTIFICATION AS A RENAL CANCER ANTIGEN</scope>
    <source>
        <tissue>Renal cell carcinoma</tissue>
    </source>
</reference>
<reference key="8">
    <citation type="journal article" date="1999" name="Science">
        <title>Signaling from Rho to the actin cytoskeleton through protein kinases ROCK and LIM-kinase.</title>
        <authorList>
            <person name="Maekawa M."/>
            <person name="Ishizaki T."/>
            <person name="Boku S."/>
            <person name="Watanabe N."/>
            <person name="Fujita A."/>
            <person name="Iwamatsu A."/>
            <person name="Obinata T."/>
            <person name="Ohashi K."/>
            <person name="Mizuno K."/>
            <person name="Narumiya S."/>
        </authorList>
    </citation>
    <scope>FUNCTION</scope>
    <scope>CATALYTIC ACTIVITY</scope>
    <scope>INTERACTION WITH LIMK1 AND LIMK2</scope>
    <scope>INHIBITION BY Y-27632</scope>
</reference>
<reference key="9">
    <citation type="journal article" date="2000" name="J. Biol. Chem.">
        <title>Rho-associated kinase ROCK activates LIM-kinase 1 by phosphorylation at threonine 508 within the activation loop.</title>
        <authorList>
            <person name="Ohashi K."/>
            <person name="Nagata K."/>
            <person name="Maekawa M."/>
            <person name="Ishizaki T."/>
            <person name="Narumiya S."/>
            <person name="Mizuno K."/>
        </authorList>
    </citation>
    <scope>FUNCTION</scope>
    <scope>CATALYTIC ACTIVITY</scope>
    <scope>INTERACTION WITH LIMK1</scope>
</reference>
<reference key="10">
    <citation type="journal article" date="2001" name="J. Biol. Chem.">
        <title>Specific activation of LIM kinase 2 via phosphorylation of threonine 505 by ROCK, a Rho-dependent protein kinase.</title>
        <authorList>
            <person name="Sumi T."/>
            <person name="Matsumoto K."/>
            <person name="Nakamura T."/>
        </authorList>
    </citation>
    <scope>FUNCTION</scope>
    <scope>CATALYTIC ACTIVITY</scope>
    <scope>INTERACTION WITH LIMK2</scope>
</reference>
<reference key="11">
    <citation type="journal article" date="2001" name="Nat. Cell Biol.">
        <title>Caspase-3-mediated cleavage of ROCK I induces MLC phosphorylation and apoptotic membrane blebbing.</title>
        <authorList>
            <person name="Sebbagh M."/>
            <person name="Renvoize C."/>
            <person name="Hamelin J."/>
            <person name="Riche N."/>
            <person name="Bertoglio J."/>
            <person name="Breard J."/>
        </authorList>
    </citation>
    <scope>CLEAVAGE BY CASPASE-3</scope>
    <scope>MUTAGENESIS OF ASP-1113</scope>
    <scope>INTERACTION WITH PPP1R12A</scope>
    <scope>FUNCTION</scope>
</reference>
<reference key="12">
    <citation type="journal article" date="2002" name="J. Cell Biol.">
        <title>The GTP binding proteins Gem and Rad are negative regulators of the Rho-Rho kinase pathway.</title>
        <authorList>
            <person name="Ward Y."/>
            <person name="Yap S.-F."/>
            <person name="Ravichandran V."/>
            <person name="Matsumura F."/>
            <person name="Ito M."/>
            <person name="Spinelli B."/>
            <person name="Kelly K."/>
        </authorList>
    </citation>
    <scope>INTERACTION WITH GEM</scope>
</reference>
<reference key="13">
    <citation type="journal article" date="2003" name="Mol. Cell. Biol.">
        <title>RhoE binds to ROCK I and inhibits downstream signaling.</title>
        <authorList>
            <person name="Riento K."/>
            <person name="Guasch R.M."/>
            <person name="Garg R."/>
            <person name="Jin B."/>
            <person name="Ridley A.J."/>
        </authorList>
    </citation>
    <scope>INTERACTION WITH RHOE AND PPP1R12A</scope>
    <scope>SUBCELLULAR LOCATION</scope>
</reference>
<reference key="14">
    <citation type="journal article" date="2003" name="Nat. Rev. Mol. Cell Biol.">
        <title>Rocks: multifunctional kinases in cell behaviour.</title>
        <authorList>
            <person name="Riento K."/>
            <person name="Ridley A.J."/>
        </authorList>
    </citation>
    <scope>REVIEW</scope>
</reference>
<reference key="15">
    <citation type="journal article" date="2007" name="EMBO J.">
        <title>Human ESCRT and ALIX proteins interact with proteins of the midbody and function in cytokinesis.</title>
        <authorList>
            <person name="Morita E."/>
            <person name="Sandrin V."/>
            <person name="Chung H.Y."/>
            <person name="Morham S.G."/>
            <person name="Gygi S.P."/>
            <person name="Rodesch C.K."/>
            <person name="Sundquist W.I."/>
        </authorList>
    </citation>
    <scope>INTERACTION WITH TSG101</scope>
</reference>
<reference key="16">
    <citation type="journal article" date="2007" name="J. Biol. Chem.">
        <title>ROCK1 phosphorylates and activates zipper-interacting protein kinase.</title>
        <authorList>
            <person name="Hagerty L."/>
            <person name="Weitzel D.H."/>
            <person name="Chambers J."/>
            <person name="Fortner C.N."/>
            <person name="Brush M.H."/>
            <person name="Loiselle D."/>
            <person name="Hosoya H."/>
            <person name="Haystead T.A."/>
        </authorList>
    </citation>
    <scope>FUNCTION</scope>
    <scope>INTERACTION WITH DAPK3</scope>
</reference>
<reference key="17">
    <citation type="journal article" date="2008" name="J. Biol. Chem.">
        <title>The diaphanous-related formin FHOD1 associates with ROCK1 and promotes Src-dependent plasma membrane blebbing.</title>
        <authorList>
            <person name="Hannemann S."/>
            <person name="Madrid R."/>
            <person name="Stastna J."/>
            <person name="Kitzing T."/>
            <person name="Gasteier J."/>
            <person name="Schoenichen A."/>
            <person name="Bouchet J."/>
            <person name="Jimenez A."/>
            <person name="Geyer M."/>
            <person name="Grosse R."/>
            <person name="Benichou S."/>
            <person name="Fackler O.T."/>
        </authorList>
    </citation>
    <scope>FUNCTION</scope>
    <scope>INTERACTION WITH FHOD1</scope>
    <scope>SUBCELLULAR LOCATION</scope>
</reference>
<reference key="18">
    <citation type="journal article" date="2008" name="Mol. Cell">
        <title>Kinase-selective enrichment enables quantitative phosphoproteomics of the kinome across the cell cycle.</title>
        <authorList>
            <person name="Daub H."/>
            <person name="Olsen J.V."/>
            <person name="Bairlein M."/>
            <person name="Gnad F."/>
            <person name="Oppermann F.S."/>
            <person name="Korner R."/>
            <person name="Greff Z."/>
            <person name="Keri G."/>
            <person name="Stemmann O."/>
            <person name="Mann M."/>
        </authorList>
    </citation>
    <scope>PHOSPHORYLATION [LARGE SCALE ANALYSIS] AT SER-1105</scope>
    <scope>IDENTIFICATION BY MASS SPECTROMETRY [LARGE SCALE ANALYSIS]</scope>
    <source>
        <tissue>Cervix carcinoma</tissue>
    </source>
</reference>
<reference key="19">
    <citation type="journal article" date="2008" name="Mol. Cell. Biol.">
        <title>Phosphorylation of profilin by ROCK1 regulates polyglutamine aggregation.</title>
        <authorList>
            <person name="Shao J."/>
            <person name="Welch W.J."/>
            <person name="Diprospero N.A."/>
            <person name="Diamond M.I."/>
        </authorList>
    </citation>
    <scope>FUNCTION</scope>
    <scope>INTERACTION WITH PFN1</scope>
</reference>
<reference key="20">
    <citation type="journal article" date="2008" name="Proc. Natl. Acad. Sci. U.S.A.">
        <title>A quantitative atlas of mitotic phosphorylation.</title>
        <authorList>
            <person name="Dephoure N."/>
            <person name="Zhou C."/>
            <person name="Villen J."/>
            <person name="Beausoleil S.A."/>
            <person name="Bakalarski C.E."/>
            <person name="Elledge S.J."/>
            <person name="Gygi S.P."/>
        </authorList>
    </citation>
    <scope>IDENTIFICATION BY MASS SPECTROMETRY [LARGE SCALE ANALYSIS]</scope>
    <source>
        <tissue>Cervix carcinoma</tissue>
    </source>
</reference>
<reference key="21">
    <citation type="journal article" date="2008" name="Sci. Signal.">
        <title>Identification of ROCK1 as an upstream activator of the JIP-3 to JNK signaling axis in response to UVB damage.</title>
        <authorList>
            <person name="Ongusaha P.P."/>
            <person name="Qi H.H."/>
            <person name="Raj L."/>
            <person name="Kim Y.B."/>
            <person name="Aaronson S.A."/>
            <person name="Davis R.J."/>
            <person name="Shi Y."/>
            <person name="Liao J.K."/>
            <person name="Lee S.W."/>
        </authorList>
    </citation>
    <scope>FUNCTION</scope>
    <scope>INTERACTION WITH JIP3</scope>
</reference>
<reference key="22">
    <citation type="journal article" date="2009" name="Am. J. Physiol.">
        <title>Inhibition of Rho-dependent kinases ROCK I/II activates VEGF-driven retinal neovascularization and sprouting angiogenesis.</title>
        <authorList>
            <person name="Kroll J."/>
            <person name="Epting D."/>
            <person name="Kern K."/>
            <person name="Dietz C.T."/>
            <person name="Feng Y."/>
            <person name="Hammes H.P."/>
            <person name="Wieland T."/>
            <person name="Augustin H.G."/>
        </authorList>
    </citation>
    <scope>FUNCTION</scope>
</reference>
<reference key="23">
    <citation type="journal article" date="2009" name="Circ. Res.">
        <title>ROCK isoform regulation of myosin phosphatase and contractility in vascular smooth muscle cells.</title>
        <authorList>
            <person name="Wang Y."/>
            <person name="Zheng X.R."/>
            <person name="Riddick N."/>
            <person name="Bryden M."/>
            <person name="Baur W."/>
            <person name="Zhang X."/>
            <person name="Surks H.K."/>
        </authorList>
    </citation>
    <scope>FUNCTION</scope>
    <scope>INTERACTION WITH PPP1R12A</scope>
</reference>
<reference key="24">
    <citation type="journal article" date="2009" name="PLoS ONE">
        <title>Distinct roles for ROCK1 and ROCK2 in the regulation of keratinocyte differentiation.</title>
        <authorList>
            <person name="Lock F.E."/>
            <person name="Hotchin N.A."/>
        </authorList>
    </citation>
    <scope>FUNCTION</scope>
</reference>
<reference key="25">
    <citation type="journal article" date="2009" name="Sci. Signal.">
        <title>Quantitative phosphoproteomic analysis of T cell receptor signaling reveals system-wide modulation of protein-protein interactions.</title>
        <authorList>
            <person name="Mayya V."/>
            <person name="Lundgren D.H."/>
            <person name="Hwang S.-I."/>
            <person name="Rezaul K."/>
            <person name="Wu L."/>
            <person name="Eng J.K."/>
            <person name="Rodionov V."/>
            <person name="Han D.K."/>
        </authorList>
    </citation>
    <scope>PHOSPHORYLATION [LARGE SCALE ANALYSIS] AT SER-1105</scope>
    <scope>IDENTIFICATION BY MASS SPECTROMETRY [LARGE SCALE ANALYSIS]</scope>
    <source>
        <tissue>Leukemic T-cell</tissue>
    </source>
</reference>
<reference key="26">
    <citation type="journal article" date="2009" name="Science">
        <title>Lysine acetylation targets protein complexes and co-regulates major cellular functions.</title>
        <authorList>
            <person name="Choudhary C."/>
            <person name="Kumar C."/>
            <person name="Gnad F."/>
            <person name="Nielsen M.L."/>
            <person name="Rehman M."/>
            <person name="Walther T.C."/>
            <person name="Olsen J.V."/>
            <person name="Mann M."/>
        </authorList>
    </citation>
    <scope>ACETYLATION [LARGE SCALE ANALYSIS] AT LYS-647</scope>
    <scope>IDENTIFICATION BY MASS SPECTROMETRY [LARGE SCALE ANALYSIS]</scope>
</reference>
<reference key="27">
    <citation type="journal article" date="2010" name="Dev. Cell">
        <title>Morgana/chp-1, a ROCK inhibitor involved in centrosome duplication and tumorigenesis.</title>
        <authorList>
            <person name="Ferretti R."/>
            <person name="Palumbo V."/>
            <person name="Di Savino A."/>
            <person name="Velasco S."/>
            <person name="Sbroggio M."/>
            <person name="Sportoletti P."/>
            <person name="Micale L."/>
            <person name="Turco E."/>
            <person name="Silengo L."/>
            <person name="Palumbo G."/>
            <person name="Hirsch E."/>
            <person name="Teruya-Feldstein J."/>
            <person name="Bonaccorsi S."/>
            <person name="Pandolfi P.P."/>
            <person name="Gatti M."/>
            <person name="Tarone G."/>
            <person name="Brancaccio M."/>
        </authorList>
    </citation>
    <scope>INTERACTION WITH CHORDC1</scope>
</reference>
<reference key="28">
    <citation type="journal article" date="2011" name="BMC Syst. Biol.">
        <title>Initial characterization of the human central proteome.</title>
        <authorList>
            <person name="Burkard T.R."/>
            <person name="Planyavsky M."/>
            <person name="Kaupe I."/>
            <person name="Breitwieser F.P."/>
            <person name="Buerckstuemmer T."/>
            <person name="Bennett K.L."/>
            <person name="Superti-Furga G."/>
            <person name="Colinge J."/>
        </authorList>
    </citation>
    <scope>IDENTIFICATION BY MASS SPECTROMETRY [LARGE SCALE ANALYSIS]</scope>
</reference>
<reference key="29">
    <citation type="journal article" date="2011" name="Cell Death Differ.">
        <title>Caspase-activated ROCK-1 allows erythroblast terminal maturation independently of cytokine-induced Rho signaling.</title>
        <authorList>
            <person name="Gabet A.S."/>
            <person name="Coulon S."/>
            <person name="Fricot A."/>
            <person name="Vandekerckhove J."/>
            <person name="Chang Y."/>
            <person name="Ribeil J.A."/>
            <person name="Lordier L."/>
            <person name="Zermati Y."/>
            <person name="Asnafi V."/>
            <person name="Belaid Z."/>
            <person name="Debili N."/>
            <person name="Vainchenker W."/>
            <person name="Varet B."/>
            <person name="Hermine O."/>
            <person name="Courtois G."/>
        </authorList>
    </citation>
    <scope>FUNCTION</scope>
    <scope>CLEAVAGE BY CASPASE-3</scope>
</reference>
<reference key="30">
    <citation type="journal article" date="2010" name="Cytoskeleton">
        <title>Rho-kinase/ROCK: A key regulator of the cytoskeleton and cell polarity.</title>
        <authorList>
            <person name="Amano M."/>
            <person name="Nakayama M."/>
            <person name="Kaibuchi K."/>
        </authorList>
    </citation>
    <scope>REVIEW</scope>
</reference>
<reference key="31">
    <citation type="journal article" date="2011" name="Sci. Signal.">
        <title>System-wide temporal characterization of the proteome and phosphoproteome of human embryonic stem cell differentiation.</title>
        <authorList>
            <person name="Rigbolt K.T."/>
            <person name="Prokhorova T.A."/>
            <person name="Akimov V."/>
            <person name="Henningsen J."/>
            <person name="Johansen P.T."/>
            <person name="Kratchmarova I."/>
            <person name="Kassem M."/>
            <person name="Mann M."/>
            <person name="Olsen J.V."/>
            <person name="Blagoev B."/>
        </authorList>
    </citation>
    <scope>IDENTIFICATION BY MASS SPECTROMETRY [LARGE SCALE ANALYSIS]</scope>
</reference>
<reference key="32">
    <citation type="journal article" date="2012" name="J. Biol. Chem.">
        <title>Rho-associated coiled-coil kinase (ROCK) protein controls microtubule dynamics in a novel signaling pathway that regulates cell migration.</title>
        <authorList>
            <person name="Schofield A.V."/>
            <person name="Steel R."/>
            <person name="Bernard O."/>
        </authorList>
    </citation>
    <scope>FUNCTION</scope>
    <scope>CATALYTIC ACTIVITY</scope>
</reference>
<reference key="33">
    <citation type="journal article" date="2012" name="Mol. Biol. Cell">
        <title>Structure of Shroom domain 2 reveals a three-segmented coiled-coil required for dimerization, Rock binding, and apical constriction.</title>
        <authorList>
            <person name="Mohan S."/>
            <person name="Rizaldy R."/>
            <person name="Das D."/>
            <person name="Bauer R.J."/>
            <person name="Heroux A."/>
            <person name="Trakselis M.A."/>
            <person name="Hildebrand J.D."/>
            <person name="VanDemark A.P."/>
        </authorList>
    </citation>
    <scope>INTERACTION WITH SHROOM3</scope>
</reference>
<reference key="34">
    <citation type="journal article" date="2012" name="Proc. Natl. Acad. Sci. U.S.A.">
        <title>N-terminal acetylome analyses and functional insights of the N-terminal acetyltransferase NatB.</title>
        <authorList>
            <person name="Van Damme P."/>
            <person name="Lasa M."/>
            <person name="Polevoda B."/>
            <person name="Gazquez C."/>
            <person name="Elosegui-Artola A."/>
            <person name="Kim D.S."/>
            <person name="De Juan-Pardo E."/>
            <person name="Demeyer K."/>
            <person name="Hole K."/>
            <person name="Larrea E."/>
            <person name="Timmerman E."/>
            <person name="Prieto J."/>
            <person name="Arnesen T."/>
            <person name="Sherman F."/>
            <person name="Gevaert K."/>
            <person name="Aldabe R."/>
        </authorList>
    </citation>
    <scope>ACETYLATION [LARGE SCALE ANALYSIS] AT SER-2</scope>
    <scope>CLEAVAGE OF INITIATOR METHIONINE [LARGE SCALE ANALYSIS]</scope>
    <scope>IDENTIFICATION BY MASS SPECTROMETRY [LARGE SCALE ANALYSIS]</scope>
</reference>
<reference key="35">
    <citation type="journal article" date="2013" name="J. Biol. Chem.">
        <title>Tubulin polymerization promoting protein 1 (Tppp1) phosphorylation by Rho-associated coiled-coil kinase (rock) and cyclin-dependent kinase 1 (Cdk1) inhibits microtubule dynamics to increase cell proliferation.</title>
        <authorList>
            <person name="Schofield A.V."/>
            <person name="Gamell C."/>
            <person name="Suryadinata R."/>
            <person name="Sarcevic B."/>
            <person name="Bernard O."/>
        </authorList>
    </citation>
    <scope>FUNCTION</scope>
    <scope>CATALYTIC ACTIVITY</scope>
</reference>
<reference key="36">
    <citation type="journal article" date="2013" name="J. Proteome Res.">
        <title>Toward a comprehensive characterization of a human cancer cell phosphoproteome.</title>
        <authorList>
            <person name="Zhou H."/>
            <person name="Di Palma S."/>
            <person name="Preisinger C."/>
            <person name="Peng M."/>
            <person name="Polat A.N."/>
            <person name="Heck A.J."/>
            <person name="Mohammed S."/>
        </authorList>
    </citation>
    <scope>PHOSPHORYLATION [LARGE SCALE ANALYSIS] AT SER-1328</scope>
    <scope>IDENTIFICATION BY MASS SPECTROMETRY [LARGE SCALE ANALYSIS]</scope>
    <source>
        <tissue>Erythroleukemia</tissue>
    </source>
</reference>
<reference key="37">
    <citation type="journal article" date="2014" name="J. Proteomics">
        <title>An enzyme assisted RP-RPLC approach for in-depth analysis of human liver phosphoproteome.</title>
        <authorList>
            <person name="Bian Y."/>
            <person name="Song C."/>
            <person name="Cheng K."/>
            <person name="Dong M."/>
            <person name="Wang F."/>
            <person name="Huang J."/>
            <person name="Sun D."/>
            <person name="Wang L."/>
            <person name="Ye M."/>
            <person name="Zou H."/>
        </authorList>
    </citation>
    <scope>IDENTIFICATION BY MASS SPECTROMETRY [LARGE SCALE ANALYSIS]</scope>
    <source>
        <tissue>Liver</tissue>
    </source>
</reference>
<reference key="38">
    <citation type="journal article" date="2004" name="J. Biol. Chem.">
        <title>Structural insights into the interaction of ROCKI with the switch regions of RhoA.</title>
        <authorList>
            <person name="Dvorsky R."/>
            <person name="Blumenstein L."/>
            <person name="Vetter I.R."/>
            <person name="Ahmadian M.R."/>
        </authorList>
    </citation>
    <scope>X-RAY CRYSTALLOGRAPHY (2.6 ANGSTROMS) OF 947-1015 IN COMPLEX WITH RHOA</scope>
</reference>
<reference key="39">
    <citation type="journal article" date="2006" name="J. Biol. Chem.">
        <title>The structure of dimeric ROCK I reveals the mechanism for ligand selectivity.</title>
        <authorList>
            <person name="Jacobs M."/>
            <person name="Hayakawa K."/>
            <person name="Swenson L."/>
            <person name="Bellon S."/>
            <person name="Fleming M."/>
            <person name="Taslimi P."/>
            <person name="Doran J."/>
        </authorList>
    </citation>
    <scope>X-RAY CRYSTALLOGRAPHY (2.60 ANGSTROMS) OF 6-415</scope>
    <scope>SUBUNIT</scope>
</reference>
<reference key="40">
    <citation type="journal article" date="2007" name="Nature">
        <title>Patterns of somatic mutation in human cancer genomes.</title>
        <authorList>
            <person name="Greenman C."/>
            <person name="Stephens P."/>
            <person name="Smith R."/>
            <person name="Dalgliesh G.L."/>
            <person name="Hunter C."/>
            <person name="Bignell G."/>
            <person name="Davies H."/>
            <person name="Teague J."/>
            <person name="Butler A."/>
            <person name="Stevens C."/>
            <person name="Edkins S."/>
            <person name="O'Meara S."/>
            <person name="Vastrik I."/>
            <person name="Schmidt E.E."/>
            <person name="Avis T."/>
            <person name="Barthorpe S."/>
            <person name="Bhamra G."/>
            <person name="Buck G."/>
            <person name="Choudhury B."/>
            <person name="Clements J."/>
            <person name="Cole J."/>
            <person name="Dicks E."/>
            <person name="Forbes S."/>
            <person name="Gray K."/>
            <person name="Halliday K."/>
            <person name="Harrison R."/>
            <person name="Hills K."/>
            <person name="Hinton J."/>
            <person name="Jenkinson A."/>
            <person name="Jones D."/>
            <person name="Menzies A."/>
            <person name="Mironenko T."/>
            <person name="Perry J."/>
            <person name="Raine K."/>
            <person name="Richardson D."/>
            <person name="Shepherd R."/>
            <person name="Small A."/>
            <person name="Tofts C."/>
            <person name="Varian J."/>
            <person name="Webb T."/>
            <person name="West S."/>
            <person name="Widaa S."/>
            <person name="Yates A."/>
            <person name="Cahill D.P."/>
            <person name="Louis D.N."/>
            <person name="Goldstraw P."/>
            <person name="Nicholson A.G."/>
            <person name="Brasseur F."/>
            <person name="Looijenga L."/>
            <person name="Weber B.L."/>
            <person name="Chiew Y.-E."/>
            <person name="DeFazio A."/>
            <person name="Greaves M.F."/>
            <person name="Green A.R."/>
            <person name="Campbell P."/>
            <person name="Birney E."/>
            <person name="Easton D.F."/>
            <person name="Chenevix-Trench G."/>
            <person name="Tan M.-H."/>
            <person name="Khoo S.K."/>
            <person name="Teh B.T."/>
            <person name="Yuen S.T."/>
            <person name="Leung S.Y."/>
            <person name="Wooster R."/>
            <person name="Futreal P.A."/>
            <person name="Stratton M.R."/>
        </authorList>
    </citation>
    <scope>VARIANTS [LARGE SCALE ANALYSIS] ASN-108; SER-773; PRO-1112; SER-1193; GLU-1217; GLN-1262 AND ARG-1264</scope>
</reference>
<feature type="initiator methionine" description="Removed" evidence="36 41">
    <location>
        <position position="1"/>
    </location>
</feature>
<feature type="chain" id="PRO_0000086619" description="Rho-associated protein kinase 1">
    <location>
        <begin position="2"/>
        <end position="1354"/>
    </location>
</feature>
<feature type="domain" description="Protein kinase" evidence="5">
    <location>
        <begin position="76"/>
        <end position="338"/>
    </location>
</feature>
<feature type="domain" description="AGC-kinase C-terminal" evidence="7">
    <location>
        <begin position="341"/>
        <end position="409"/>
    </location>
</feature>
<feature type="domain" description="REM-1" evidence="9">
    <location>
        <begin position="479"/>
        <end position="556"/>
    </location>
</feature>
<feature type="domain" description="RhoBD" evidence="8">
    <location>
        <begin position="949"/>
        <end position="1015"/>
    </location>
</feature>
<feature type="domain" description="PH" evidence="4">
    <location>
        <begin position="1118"/>
        <end position="1317"/>
    </location>
</feature>
<feature type="zinc finger region" description="Phorbol-ester/DAG-type" evidence="6">
    <location>
        <begin position="1228"/>
        <end position="1281"/>
    </location>
</feature>
<feature type="region of interest" description="Interaction with FHOD1" evidence="24">
    <location>
        <begin position="368"/>
        <end position="727"/>
    </location>
</feature>
<feature type="region of interest" description="SHROOM3 binding" evidence="31">
    <location>
        <begin position="707"/>
        <end position="946"/>
    </location>
</feature>
<feature type="region of interest" description="RHOA binding">
    <location>
        <begin position="998"/>
        <end position="1010"/>
    </location>
</feature>
<feature type="region of interest" description="Auto-inhibitory">
    <location>
        <begin position="1115"/>
        <end position="1354"/>
    </location>
</feature>
<feature type="region of interest" description="Disordered" evidence="11">
    <location>
        <begin position="1320"/>
        <end position="1354"/>
    </location>
</feature>
<feature type="coiled-coil region" evidence="3">
    <location>
        <begin position="422"/>
        <end position="692"/>
    </location>
</feature>
<feature type="coiled-coil region" evidence="3">
    <location>
        <begin position="1011"/>
        <end position="1102"/>
    </location>
</feature>
<feature type="compositionally biased region" description="Polar residues" evidence="11">
    <location>
        <begin position="1330"/>
        <end position="1354"/>
    </location>
</feature>
<feature type="active site" description="Proton acceptor" evidence="5 10">
    <location>
        <position position="198"/>
    </location>
</feature>
<feature type="binding site" evidence="5">
    <location>
        <begin position="82"/>
        <end position="90"/>
    </location>
    <ligand>
        <name>ATP</name>
        <dbReference type="ChEBI" id="CHEBI:30616"/>
    </ligand>
</feature>
<feature type="binding site" evidence="5">
    <location>
        <position position="105"/>
    </location>
    <ligand>
        <name>ATP</name>
        <dbReference type="ChEBI" id="CHEBI:30616"/>
    </ligand>
</feature>
<feature type="site" description="Cleavage; by caspase-3">
    <location>
        <begin position="1113"/>
        <end position="1114"/>
    </location>
</feature>
<feature type="modified residue" description="N-acetylserine" evidence="36 41">
    <location>
        <position position="2"/>
    </location>
</feature>
<feature type="modified residue" description="N6-acetyllysine" evidence="39">
    <location>
        <position position="647"/>
    </location>
</feature>
<feature type="modified residue" description="Phosphoserine" evidence="38 40">
    <location>
        <position position="1105"/>
    </location>
</feature>
<feature type="modified residue" description="Phosphoserine" evidence="1">
    <location>
        <position position="1108"/>
    </location>
</feature>
<feature type="modified residue" description="Phosphoserine" evidence="42">
    <location>
        <position position="1328"/>
    </location>
</feature>
<feature type="sequence variant" id="VAR_041055" description="In dbSNP:rs55811609." evidence="21">
    <original>S</original>
    <variation>N</variation>
    <location>
        <position position="108"/>
    </location>
</feature>
<feature type="sequence variant" id="VAR_041056" description="In dbSNP:rs45562542." evidence="21">
    <original>T</original>
    <variation>S</variation>
    <location>
        <position position="773"/>
    </location>
</feature>
<feature type="sequence variant" id="VAR_041057" description="In dbSNP:rs35881519." evidence="21">
    <original>T</original>
    <variation>P</variation>
    <location>
        <position position="1112"/>
    </location>
</feature>
<feature type="sequence variant" id="VAR_041058" description="In a lung neuroendocrine carcinoma sample; somatic mutation; dbSNP:rs1057520015." evidence="21">
    <original>P</original>
    <variation>S</variation>
    <location>
        <position position="1193"/>
    </location>
</feature>
<feature type="sequence variant" id="VAR_041059" description="In dbSNP:rs201390233." evidence="21">
    <original>Q</original>
    <variation>E</variation>
    <location>
        <position position="1217"/>
    </location>
</feature>
<feature type="sequence variant" id="VAR_041060" description="In dbSNP:rs1045142." evidence="21">
    <original>R</original>
    <variation>Q</variation>
    <location>
        <position position="1262"/>
    </location>
</feature>
<feature type="sequence variant" id="VAR_041061" description="In dbSNP:rs2663698." evidence="21">
    <original>C</original>
    <variation>R</variation>
    <location>
        <position position="1264"/>
    </location>
</feature>
<feature type="mutagenesis site" description="Abolishes cleavage by caspase-3." evidence="15">
    <original>D</original>
    <variation>A</variation>
    <location>
        <position position="1113"/>
    </location>
</feature>
<feature type="sequence conflict" description="In Ref. 3; AAI13115." evidence="37" ref="3">
    <original>V</original>
    <variation>A</variation>
    <location>
        <position position="170"/>
    </location>
</feature>
<feature type="sequence conflict" description="In Ref. 3; AAI13115." evidence="37" ref="3">
    <original>R</original>
    <variation>G</variation>
    <location>
        <position position="197"/>
    </location>
</feature>
<feature type="sequence conflict" description="In Ref. 3; AAI13115." evidence="37" ref="3">
    <original>C</original>
    <variation>R</variation>
    <location>
        <position position="220"/>
    </location>
</feature>
<feature type="sequence conflict" description="In Ref. 5; BAD92202." evidence="37" ref="5">
    <original>RLG</original>
    <variation>GTR</variation>
    <location>
        <begin position="323"/>
        <end position="325"/>
    </location>
</feature>
<feature type="sequence conflict" description="In Ref. 3; AAI13115." evidence="37" ref="3">
    <original>D</original>
    <variation>N</variation>
    <location>
        <position position="521"/>
    </location>
</feature>
<feature type="sequence conflict" description="In Ref. 3; AAI13115." evidence="37" ref="3">
    <original>K</original>
    <variation>R</variation>
    <location>
        <position position="965"/>
    </location>
</feature>
<feature type="sequence conflict" description="In Ref. 2; ACA06069." evidence="37" ref="2">
    <original>S</original>
    <variation>R</variation>
    <location>
        <position position="1354"/>
    </location>
</feature>
<feature type="helix" evidence="47">
    <location>
        <begin position="9"/>
        <end position="19"/>
    </location>
</feature>
<feature type="strand" evidence="50">
    <location>
        <begin position="24"/>
        <end position="26"/>
    </location>
</feature>
<feature type="helix" evidence="47">
    <location>
        <begin position="27"/>
        <end position="41"/>
    </location>
</feature>
<feature type="helix" evidence="47">
    <location>
        <begin position="44"/>
        <end position="47"/>
    </location>
</feature>
<feature type="helix" evidence="47">
    <location>
        <begin position="50"/>
        <end position="69"/>
    </location>
</feature>
<feature type="helix" evidence="47">
    <location>
        <begin position="73"/>
        <end position="75"/>
    </location>
</feature>
<feature type="strand" evidence="47">
    <location>
        <begin position="76"/>
        <end position="84"/>
    </location>
</feature>
<feature type="strand" evidence="47">
    <location>
        <begin position="86"/>
        <end position="95"/>
    </location>
</feature>
<feature type="turn" evidence="47">
    <location>
        <begin position="96"/>
        <end position="98"/>
    </location>
</feature>
<feature type="strand" evidence="47">
    <location>
        <begin position="101"/>
        <end position="108"/>
    </location>
</feature>
<feature type="helix" evidence="47">
    <location>
        <begin position="109"/>
        <end position="114"/>
    </location>
</feature>
<feature type="helix" evidence="47">
    <location>
        <begin position="121"/>
        <end position="130"/>
    </location>
</feature>
<feature type="strand" evidence="47">
    <location>
        <begin position="139"/>
        <end position="144"/>
    </location>
</feature>
<feature type="strand" evidence="47">
    <location>
        <begin position="146"/>
        <end position="153"/>
    </location>
</feature>
<feature type="strand" evidence="46">
    <location>
        <begin position="157"/>
        <end position="160"/>
    </location>
</feature>
<feature type="helix" evidence="47">
    <location>
        <begin position="161"/>
        <end position="167"/>
    </location>
</feature>
<feature type="helix" evidence="47">
    <location>
        <begin position="172"/>
        <end position="191"/>
    </location>
</feature>
<feature type="helix" evidence="47">
    <location>
        <begin position="201"/>
        <end position="203"/>
    </location>
</feature>
<feature type="strand" evidence="47">
    <location>
        <begin position="204"/>
        <end position="206"/>
    </location>
</feature>
<feature type="strand" evidence="47">
    <location>
        <begin position="212"/>
        <end position="214"/>
    </location>
</feature>
<feature type="helix" evidence="49">
    <location>
        <begin position="217"/>
        <end position="219"/>
    </location>
</feature>
<feature type="strand" evidence="47">
    <location>
        <begin position="227"/>
        <end position="230"/>
    </location>
</feature>
<feature type="helix" evidence="47">
    <location>
        <begin position="238"/>
        <end position="240"/>
    </location>
</feature>
<feature type="helix" evidence="47">
    <location>
        <begin position="243"/>
        <end position="247"/>
    </location>
</feature>
<feature type="turn" evidence="47">
    <location>
        <begin position="248"/>
        <end position="252"/>
    </location>
</feature>
<feature type="strand" evidence="47">
    <location>
        <begin position="254"/>
        <end position="256"/>
    </location>
</feature>
<feature type="helix" evidence="47">
    <location>
        <begin position="258"/>
        <end position="273"/>
    </location>
</feature>
<feature type="helix" evidence="47">
    <location>
        <begin position="283"/>
        <end position="291"/>
    </location>
</feature>
<feature type="helix" evidence="47">
    <location>
        <begin position="293"/>
        <end position="296"/>
    </location>
</feature>
<feature type="helix" evidence="47">
    <location>
        <begin position="307"/>
        <end position="316"/>
    </location>
</feature>
<feature type="helix" evidence="47">
    <location>
        <begin position="320"/>
        <end position="322"/>
    </location>
</feature>
<feature type="turn" evidence="51">
    <location>
        <begin position="324"/>
        <end position="327"/>
    </location>
</feature>
<feature type="helix" evidence="47">
    <location>
        <begin position="329"/>
        <end position="333"/>
    </location>
</feature>
<feature type="helix" evidence="47">
    <location>
        <begin position="336"/>
        <end position="338"/>
    </location>
</feature>
<feature type="turn" evidence="51">
    <location>
        <begin position="345"/>
        <end position="347"/>
    </location>
</feature>
<feature type="helix" evidence="47">
    <location>
        <begin position="348"/>
        <end position="350"/>
    </location>
</feature>
<feature type="helix" evidence="45">
    <location>
        <begin position="365"/>
        <end position="367"/>
    </location>
</feature>
<feature type="helix" evidence="47">
    <location>
        <begin position="392"/>
        <end position="394"/>
    </location>
</feature>
<feature type="strand" evidence="44">
    <location>
        <begin position="399"/>
        <end position="402"/>
    </location>
</feature>
<feature type="helix" evidence="52">
    <location>
        <begin position="420"/>
        <end position="549"/>
    </location>
</feature>
<feature type="helix" evidence="48">
    <location>
        <begin position="840"/>
        <end position="902"/>
    </location>
</feature>
<feature type="helix" evidence="43">
    <location>
        <begin position="947"/>
        <end position="982"/>
    </location>
</feature>
<feature type="helix" evidence="43">
    <location>
        <begin position="984"/>
        <end position="1011"/>
    </location>
</feature>
<name>ROCK1_HUMAN</name>
<evidence type="ECO:0000250" key="1">
    <source>
        <dbReference type="UniProtKB" id="P70335"/>
    </source>
</evidence>
<evidence type="ECO:0000250" key="2">
    <source>
        <dbReference type="UniProtKB" id="Q8MIT6"/>
    </source>
</evidence>
<evidence type="ECO:0000255" key="3"/>
<evidence type="ECO:0000255" key="4">
    <source>
        <dbReference type="PROSITE-ProRule" id="PRU00145"/>
    </source>
</evidence>
<evidence type="ECO:0000255" key="5">
    <source>
        <dbReference type="PROSITE-ProRule" id="PRU00159"/>
    </source>
</evidence>
<evidence type="ECO:0000255" key="6">
    <source>
        <dbReference type="PROSITE-ProRule" id="PRU00226"/>
    </source>
</evidence>
<evidence type="ECO:0000255" key="7">
    <source>
        <dbReference type="PROSITE-ProRule" id="PRU00618"/>
    </source>
</evidence>
<evidence type="ECO:0000255" key="8">
    <source>
        <dbReference type="PROSITE-ProRule" id="PRU01206"/>
    </source>
</evidence>
<evidence type="ECO:0000255" key="9">
    <source>
        <dbReference type="PROSITE-ProRule" id="PRU01207"/>
    </source>
</evidence>
<evidence type="ECO:0000255" key="10">
    <source>
        <dbReference type="PROSITE-ProRule" id="PRU10027"/>
    </source>
</evidence>
<evidence type="ECO:0000256" key="11">
    <source>
        <dbReference type="SAM" id="MobiDB-lite"/>
    </source>
</evidence>
<evidence type="ECO:0000269" key="12">
    <source>
    </source>
</evidence>
<evidence type="ECO:0000269" key="13">
    <source>
    </source>
</evidence>
<evidence type="ECO:0000269" key="14">
    <source>
    </source>
</evidence>
<evidence type="ECO:0000269" key="15">
    <source>
    </source>
</evidence>
<evidence type="ECO:0000269" key="16">
    <source>
    </source>
</evidence>
<evidence type="ECO:0000269" key="17">
    <source>
    </source>
</evidence>
<evidence type="ECO:0000269" key="18">
    <source>
    </source>
</evidence>
<evidence type="ECO:0000269" key="19">
    <source>
    </source>
</evidence>
<evidence type="ECO:0000269" key="20">
    <source>
    </source>
</evidence>
<evidence type="ECO:0000269" key="21">
    <source>
    </source>
</evidence>
<evidence type="ECO:0000269" key="22">
    <source>
    </source>
</evidence>
<evidence type="ECO:0000269" key="23">
    <source>
    </source>
</evidence>
<evidence type="ECO:0000269" key="24">
    <source>
    </source>
</evidence>
<evidence type="ECO:0000269" key="25">
    <source>
    </source>
</evidence>
<evidence type="ECO:0000269" key="26">
    <source>
    </source>
</evidence>
<evidence type="ECO:0000269" key="27">
    <source>
    </source>
</evidence>
<evidence type="ECO:0000269" key="28">
    <source>
    </source>
</evidence>
<evidence type="ECO:0000269" key="29">
    <source>
    </source>
</evidence>
<evidence type="ECO:0000269" key="30">
    <source>
    </source>
</evidence>
<evidence type="ECO:0000269" key="31">
    <source>
    </source>
</evidence>
<evidence type="ECO:0000269" key="32">
    <source>
    </source>
</evidence>
<evidence type="ECO:0000269" key="33">
    <source>
    </source>
</evidence>
<evidence type="ECO:0000269" key="34">
    <source>
    </source>
</evidence>
<evidence type="ECO:0000269" key="35">
    <source>
    </source>
</evidence>
<evidence type="ECO:0000269" key="36">
    <source ref="4"/>
</evidence>
<evidence type="ECO:0000305" key="37"/>
<evidence type="ECO:0007744" key="38">
    <source>
    </source>
</evidence>
<evidence type="ECO:0007744" key="39">
    <source>
    </source>
</evidence>
<evidence type="ECO:0007744" key="40">
    <source>
    </source>
</evidence>
<evidence type="ECO:0007744" key="41">
    <source>
    </source>
</evidence>
<evidence type="ECO:0007744" key="42">
    <source>
    </source>
</evidence>
<evidence type="ECO:0007829" key="43">
    <source>
        <dbReference type="PDB" id="1S1C"/>
    </source>
</evidence>
<evidence type="ECO:0007829" key="44">
    <source>
        <dbReference type="PDB" id="2ETR"/>
    </source>
</evidence>
<evidence type="ECO:0007829" key="45">
    <source>
        <dbReference type="PDB" id="3NCZ"/>
    </source>
</evidence>
<evidence type="ECO:0007829" key="46">
    <source>
        <dbReference type="PDB" id="3NDM"/>
    </source>
</evidence>
<evidence type="ECO:0007829" key="47">
    <source>
        <dbReference type="PDB" id="3V8S"/>
    </source>
</evidence>
<evidence type="ECO:0007829" key="48">
    <source>
        <dbReference type="PDB" id="4L2W"/>
    </source>
</evidence>
<evidence type="ECO:0007829" key="49">
    <source>
        <dbReference type="PDB" id="5KKS"/>
    </source>
</evidence>
<evidence type="ECO:0007829" key="50">
    <source>
        <dbReference type="PDB" id="5WNG"/>
    </source>
</evidence>
<evidence type="ECO:0007829" key="51">
    <source>
        <dbReference type="PDB" id="7S25"/>
    </source>
</evidence>
<evidence type="ECO:0007829" key="52">
    <source>
        <dbReference type="PDB" id="8P0S"/>
    </source>
</evidence>
<keyword id="KW-0002">3D-structure</keyword>
<keyword id="KW-0007">Acetylation</keyword>
<keyword id="KW-0053">Apoptosis</keyword>
<keyword id="KW-0067">ATP-binding</keyword>
<keyword id="KW-1003">Cell membrane</keyword>
<keyword id="KW-0966">Cell projection</keyword>
<keyword id="KW-0175">Coiled coil</keyword>
<keyword id="KW-0963">Cytoplasm</keyword>
<keyword id="KW-0206">Cytoskeleton</keyword>
<keyword id="KW-0903">Direct protein sequencing</keyword>
<keyword id="KW-0333">Golgi apparatus</keyword>
<keyword id="KW-0418">Kinase</keyword>
<keyword id="KW-0460">Magnesium</keyword>
<keyword id="KW-0472">Membrane</keyword>
<keyword id="KW-0479">Metal-binding</keyword>
<keyword id="KW-0547">Nucleotide-binding</keyword>
<keyword id="KW-0597">Phosphoprotein</keyword>
<keyword id="KW-1267">Proteomics identification</keyword>
<keyword id="KW-1185">Reference proteome</keyword>
<keyword id="KW-0723">Serine/threonine-protein kinase</keyword>
<keyword id="KW-0808">Transferase</keyword>
<keyword id="KW-0862">Zinc</keyword>
<keyword id="KW-0863">Zinc-finger</keyword>